<dbReference type="EMBL" id="AF001620">
    <property type="protein sequence ID" value="AAC51725.1"/>
    <property type="molecule type" value="mRNA"/>
</dbReference>
<dbReference type="EMBL" id="D88214">
    <property type="protein sequence ID" value="BAA23531.1"/>
    <property type="molecule type" value="mRNA"/>
</dbReference>
<dbReference type="EMBL" id="Z97171">
    <property type="protein sequence ID" value="CAB09899.1"/>
    <property type="molecule type" value="Genomic_DNA"/>
</dbReference>
<dbReference type="EMBL" id="Z97177">
    <property type="protein sequence ID" value="CAB09899.1"/>
    <property type="status" value="JOINED"/>
    <property type="molecule type" value="Genomic_DNA"/>
</dbReference>
<dbReference type="EMBL" id="Z97174">
    <property type="protein sequence ID" value="CAB09899.1"/>
    <property type="status" value="JOINED"/>
    <property type="molecule type" value="Genomic_DNA"/>
</dbReference>
<dbReference type="EMBL" id="U85257">
    <property type="protein sequence ID" value="AAC52051.1"/>
    <property type="molecule type" value="mRNA"/>
</dbReference>
<dbReference type="EMBL" id="AB006688">
    <property type="protein sequence ID" value="BAA24532.1"/>
    <property type="status" value="ALT_INIT"/>
    <property type="molecule type" value="Genomic_DNA"/>
</dbReference>
<dbReference type="EMBL" id="AF049793">
    <property type="protein sequence ID" value="AAC14264.1"/>
    <property type="molecule type" value="Genomic_DNA"/>
</dbReference>
<dbReference type="EMBL" id="AF049791">
    <property type="protein sequence ID" value="AAC14264.1"/>
    <property type="status" value="JOINED"/>
    <property type="molecule type" value="Genomic_DNA"/>
</dbReference>
<dbReference type="EMBL" id="AF049792">
    <property type="protein sequence ID" value="AAC14264.1"/>
    <property type="status" value="JOINED"/>
    <property type="molecule type" value="Genomic_DNA"/>
</dbReference>
<dbReference type="EMBL" id="AK315443">
    <property type="protein sequence ID" value="BAG37831.1"/>
    <property type="molecule type" value="mRNA"/>
</dbReference>
<dbReference type="EMBL" id="Z98750">
    <property type="status" value="NOT_ANNOTATED_CDS"/>
    <property type="molecule type" value="Genomic_DNA"/>
</dbReference>
<dbReference type="EMBL" id="CH471067">
    <property type="protein sequence ID" value="EAW90903.1"/>
    <property type="molecule type" value="Genomic_DNA"/>
</dbReference>
<dbReference type="EMBL" id="BC029261">
    <property type="protein sequence ID" value="AAH29261.1"/>
    <property type="molecule type" value="mRNA"/>
</dbReference>
<dbReference type="CCDS" id="CCDS1297.1"/>
<dbReference type="PIR" id="JC5830">
    <property type="entry name" value="JC5830"/>
</dbReference>
<dbReference type="RefSeq" id="NP_000252.1">
    <property type="nucleotide sequence ID" value="NM_000261.2"/>
</dbReference>
<dbReference type="PDB" id="4WXQ">
    <property type="method" value="X-ray"/>
    <property type="resolution" value="2.15 A"/>
    <property type="chains" value="A=228-504"/>
</dbReference>
<dbReference type="PDB" id="4WXS">
    <property type="method" value="X-ray"/>
    <property type="resolution" value="1.90 A"/>
    <property type="chains" value="A=228-504"/>
</dbReference>
<dbReference type="PDB" id="4WXU">
    <property type="method" value="X-ray"/>
    <property type="resolution" value="2.09 A"/>
    <property type="chains" value="A=228-504"/>
</dbReference>
<dbReference type="PDB" id="6OU0">
    <property type="method" value="X-ray"/>
    <property type="resolution" value="1.80 A"/>
    <property type="chains" value="A=228-504"/>
</dbReference>
<dbReference type="PDB" id="6OU1">
    <property type="method" value="X-ray"/>
    <property type="resolution" value="1.88 A"/>
    <property type="chains" value="A/B=228-504"/>
</dbReference>
<dbReference type="PDB" id="6OU2">
    <property type="method" value="X-ray"/>
    <property type="resolution" value="1.96 A"/>
    <property type="chains" value="A=228-504"/>
</dbReference>
<dbReference type="PDB" id="6OU3">
    <property type="method" value="X-ray"/>
    <property type="resolution" value="1.80 A"/>
    <property type="chains" value="A=228-504"/>
</dbReference>
<dbReference type="PDB" id="6PKD">
    <property type="method" value="X-ray"/>
    <property type="resolution" value="1.90 A"/>
    <property type="chains" value="A/B=228-504"/>
</dbReference>
<dbReference type="PDB" id="6PKE">
    <property type="method" value="X-ray"/>
    <property type="resolution" value="1.88 A"/>
    <property type="chains" value="A/B=228-504"/>
</dbReference>
<dbReference type="PDB" id="6PKF">
    <property type="method" value="X-ray"/>
    <property type="resolution" value="1.48 A"/>
    <property type="chains" value="A=228-504"/>
</dbReference>
<dbReference type="PDB" id="7SIB">
    <property type="method" value="X-ray"/>
    <property type="resolution" value="1.78 A"/>
    <property type="chains" value="A=228-504"/>
</dbReference>
<dbReference type="PDB" id="7SIJ">
    <property type="method" value="X-ray"/>
    <property type="resolution" value="1.54 A"/>
    <property type="chains" value="A=228-504"/>
</dbReference>
<dbReference type="PDB" id="7SJT">
    <property type="method" value="X-ray"/>
    <property type="resolution" value="1.54 A"/>
    <property type="chains" value="A=228-504"/>
</dbReference>
<dbReference type="PDB" id="7SJU">
    <property type="method" value="X-ray"/>
    <property type="resolution" value="1.39 A"/>
    <property type="chains" value="A=228-504"/>
</dbReference>
<dbReference type="PDB" id="7SJV">
    <property type="method" value="X-ray"/>
    <property type="resolution" value="1.39 A"/>
    <property type="chains" value="A=228-504"/>
</dbReference>
<dbReference type="PDB" id="7SJW">
    <property type="method" value="X-ray"/>
    <property type="resolution" value="1.38 A"/>
    <property type="chains" value="A=228-504"/>
</dbReference>
<dbReference type="PDB" id="7SKD">
    <property type="method" value="X-ray"/>
    <property type="resolution" value="1.71 A"/>
    <property type="chains" value="A=228-504"/>
</dbReference>
<dbReference type="PDB" id="7SKE">
    <property type="method" value="X-ray"/>
    <property type="resolution" value="1.24 A"/>
    <property type="chains" value="A=228-504"/>
</dbReference>
<dbReference type="PDB" id="7SKF">
    <property type="method" value="X-ray"/>
    <property type="resolution" value="1.28 A"/>
    <property type="chains" value="A=228-504"/>
</dbReference>
<dbReference type="PDB" id="7SKG">
    <property type="method" value="X-ray"/>
    <property type="resolution" value="1.33 A"/>
    <property type="chains" value="A=228-504"/>
</dbReference>
<dbReference type="PDB" id="7T8D">
    <property type="method" value="X-ray"/>
    <property type="resolution" value="1.38 A"/>
    <property type="chains" value="A=228-504"/>
</dbReference>
<dbReference type="PDB" id="8FRR">
    <property type="method" value="X-ray"/>
    <property type="resolution" value="1.27 A"/>
    <property type="chains" value="A=244-502"/>
</dbReference>
<dbReference type="PDBsum" id="4WXQ"/>
<dbReference type="PDBsum" id="4WXS"/>
<dbReference type="PDBsum" id="4WXU"/>
<dbReference type="PDBsum" id="6OU0"/>
<dbReference type="PDBsum" id="6OU1"/>
<dbReference type="PDBsum" id="6OU2"/>
<dbReference type="PDBsum" id="6OU3"/>
<dbReference type="PDBsum" id="6PKD"/>
<dbReference type="PDBsum" id="6PKE"/>
<dbReference type="PDBsum" id="6PKF"/>
<dbReference type="PDBsum" id="7SIB"/>
<dbReference type="PDBsum" id="7SIJ"/>
<dbReference type="PDBsum" id="7SJT"/>
<dbReference type="PDBsum" id="7SJU"/>
<dbReference type="PDBsum" id="7SJV"/>
<dbReference type="PDBsum" id="7SJW"/>
<dbReference type="PDBsum" id="7SKD"/>
<dbReference type="PDBsum" id="7SKE"/>
<dbReference type="PDBsum" id="7SKF"/>
<dbReference type="PDBsum" id="7SKG"/>
<dbReference type="PDBsum" id="7T8D"/>
<dbReference type="PDBsum" id="8FRR"/>
<dbReference type="SMR" id="Q99972"/>
<dbReference type="BioGRID" id="110736">
    <property type="interactions" value="45"/>
</dbReference>
<dbReference type="FunCoup" id="Q99972">
    <property type="interactions" value="11"/>
</dbReference>
<dbReference type="IntAct" id="Q99972">
    <property type="interactions" value="4"/>
</dbReference>
<dbReference type="STRING" id="9606.ENSP00000037502"/>
<dbReference type="BindingDB" id="Q99972"/>
<dbReference type="ChEMBL" id="CHEMBL4105967"/>
<dbReference type="GlyCosmos" id="Q99972">
    <property type="glycosylation" value="1 site, No reported glycans"/>
</dbReference>
<dbReference type="GlyGen" id="Q99972">
    <property type="glycosylation" value="2 sites, 1 O-linked glycan (1 site)"/>
</dbReference>
<dbReference type="iPTMnet" id="Q99972"/>
<dbReference type="PhosphoSitePlus" id="Q99972"/>
<dbReference type="BioMuta" id="MYOC"/>
<dbReference type="DMDM" id="3024209"/>
<dbReference type="MassIVE" id="Q99972"/>
<dbReference type="PaxDb" id="9606-ENSP00000037502"/>
<dbReference type="PeptideAtlas" id="Q99972"/>
<dbReference type="ProteomicsDB" id="78558"/>
<dbReference type="Antibodypedia" id="34380">
    <property type="antibodies" value="277 antibodies from 31 providers"/>
</dbReference>
<dbReference type="DNASU" id="4653"/>
<dbReference type="Ensembl" id="ENST00000037502.11">
    <property type="protein sequence ID" value="ENSP00000037502.5"/>
    <property type="gene ID" value="ENSG00000034971.17"/>
</dbReference>
<dbReference type="GeneID" id="4653"/>
<dbReference type="KEGG" id="hsa:4653"/>
<dbReference type="MANE-Select" id="ENST00000037502.11">
    <property type="protein sequence ID" value="ENSP00000037502.5"/>
    <property type="RefSeq nucleotide sequence ID" value="NM_000261.2"/>
    <property type="RefSeq protein sequence ID" value="NP_000252.1"/>
</dbReference>
<dbReference type="UCSC" id="uc001ghu.4">
    <property type="organism name" value="human"/>
</dbReference>
<dbReference type="AGR" id="HGNC:7610"/>
<dbReference type="CTD" id="4653"/>
<dbReference type="DisGeNET" id="4653"/>
<dbReference type="GeneCards" id="MYOC"/>
<dbReference type="HGNC" id="HGNC:7610">
    <property type="gene designation" value="MYOC"/>
</dbReference>
<dbReference type="HPA" id="ENSG00000034971">
    <property type="expression patterns" value="Tissue enhanced (tongue)"/>
</dbReference>
<dbReference type="MalaCards" id="MYOC"/>
<dbReference type="MIM" id="137750">
    <property type="type" value="phenotype"/>
</dbReference>
<dbReference type="MIM" id="231300">
    <property type="type" value="phenotype"/>
</dbReference>
<dbReference type="MIM" id="601652">
    <property type="type" value="gene"/>
</dbReference>
<dbReference type="neXtProt" id="NX_Q99972"/>
<dbReference type="OpenTargets" id="ENSG00000034971"/>
<dbReference type="Orphanet" id="98976">
    <property type="disease" value="Congenital glaucoma"/>
</dbReference>
<dbReference type="Orphanet" id="98977">
    <property type="disease" value="Juvenile glaucoma"/>
</dbReference>
<dbReference type="PharmGKB" id="PA31415"/>
<dbReference type="VEuPathDB" id="HostDB:ENSG00000034971"/>
<dbReference type="eggNOG" id="KOG3545">
    <property type="taxonomic scope" value="Eukaryota"/>
</dbReference>
<dbReference type="GeneTree" id="ENSGT00940000158561"/>
<dbReference type="HOGENOM" id="CLU_035236_4_0_1"/>
<dbReference type="InParanoid" id="Q99972"/>
<dbReference type="OMA" id="REVSKWN"/>
<dbReference type="OrthoDB" id="8626508at2759"/>
<dbReference type="PAN-GO" id="Q99972">
    <property type="GO annotations" value="4 GO annotations based on evolutionary models"/>
</dbReference>
<dbReference type="PhylomeDB" id="Q99972"/>
<dbReference type="TreeFam" id="TF315964"/>
<dbReference type="PathwayCommons" id="Q99972"/>
<dbReference type="SignaLink" id="Q99972"/>
<dbReference type="BioGRID-ORCS" id="4653">
    <property type="hits" value="17 hits in 1144 CRISPR screens"/>
</dbReference>
<dbReference type="ChiTaRS" id="MYOC">
    <property type="organism name" value="human"/>
</dbReference>
<dbReference type="EvolutionaryTrace" id="Q99972"/>
<dbReference type="GeneWiki" id="MYOC"/>
<dbReference type="GenomeRNAi" id="4653"/>
<dbReference type="Pharos" id="Q99972">
    <property type="development level" value="Tchem"/>
</dbReference>
<dbReference type="PRO" id="PR:Q99972"/>
<dbReference type="Proteomes" id="UP000005640">
    <property type="component" value="Chromosome 1"/>
</dbReference>
<dbReference type="RNAct" id="Q99972">
    <property type="molecule type" value="protein"/>
</dbReference>
<dbReference type="Bgee" id="ENSG00000034971">
    <property type="expression patterns" value="Expressed in calcaneal tendon and 135 other cell types or tissues"/>
</dbReference>
<dbReference type="ExpressionAtlas" id="Q99972">
    <property type="expression patterns" value="baseline and differential"/>
</dbReference>
<dbReference type="GO" id="GO:0005929">
    <property type="term" value="C:cilium"/>
    <property type="evidence" value="ECO:0007669"/>
    <property type="project" value="UniProtKB-SubCell"/>
</dbReference>
<dbReference type="GO" id="GO:0062023">
    <property type="term" value="C:collagen-containing extracellular matrix"/>
    <property type="evidence" value="ECO:0000314"/>
    <property type="project" value="UniProtKB"/>
</dbReference>
<dbReference type="GO" id="GO:0031410">
    <property type="term" value="C:cytoplasmic vesicle"/>
    <property type="evidence" value="ECO:0000314"/>
    <property type="project" value="UniProtKB"/>
</dbReference>
<dbReference type="GO" id="GO:0005783">
    <property type="term" value="C:endoplasmic reticulum"/>
    <property type="evidence" value="ECO:0000250"/>
    <property type="project" value="UniProtKB"/>
</dbReference>
<dbReference type="GO" id="GO:0070062">
    <property type="term" value="C:extracellular exosome"/>
    <property type="evidence" value="ECO:0007005"/>
    <property type="project" value="UniProtKB"/>
</dbReference>
<dbReference type="GO" id="GO:0005615">
    <property type="term" value="C:extracellular space"/>
    <property type="evidence" value="ECO:0000314"/>
    <property type="project" value="MGI"/>
</dbReference>
<dbReference type="GO" id="GO:0005794">
    <property type="term" value="C:Golgi apparatus"/>
    <property type="evidence" value="ECO:0000314"/>
    <property type="project" value="UniProtKB"/>
</dbReference>
<dbReference type="GO" id="GO:0005743">
    <property type="term" value="C:mitochondrial inner membrane"/>
    <property type="evidence" value="ECO:0000314"/>
    <property type="project" value="UniProtKB"/>
</dbReference>
<dbReference type="GO" id="GO:0005758">
    <property type="term" value="C:mitochondrial intermembrane space"/>
    <property type="evidence" value="ECO:0000314"/>
    <property type="project" value="UniProtKB"/>
</dbReference>
<dbReference type="GO" id="GO:0005741">
    <property type="term" value="C:mitochondrial outer membrane"/>
    <property type="evidence" value="ECO:0000314"/>
    <property type="project" value="UniProtKB"/>
</dbReference>
<dbReference type="GO" id="GO:0033268">
    <property type="term" value="C:node of Ranvier"/>
    <property type="evidence" value="ECO:0000250"/>
    <property type="project" value="UniProtKB"/>
</dbReference>
<dbReference type="GO" id="GO:0005791">
    <property type="term" value="C:rough endoplasmic reticulum"/>
    <property type="evidence" value="ECO:0007669"/>
    <property type="project" value="UniProtKB-SubCell"/>
</dbReference>
<dbReference type="GO" id="GO:0001968">
    <property type="term" value="F:fibronectin binding"/>
    <property type="evidence" value="ECO:0000353"/>
    <property type="project" value="UniProtKB"/>
</dbReference>
<dbReference type="GO" id="GO:0005109">
    <property type="term" value="F:frizzled binding"/>
    <property type="evidence" value="ECO:0000353"/>
    <property type="project" value="UniProtKB"/>
</dbReference>
<dbReference type="GO" id="GO:0046872">
    <property type="term" value="F:metal ion binding"/>
    <property type="evidence" value="ECO:0007669"/>
    <property type="project" value="UniProtKB-KW"/>
</dbReference>
<dbReference type="GO" id="GO:0032027">
    <property type="term" value="F:myosin light chain binding"/>
    <property type="evidence" value="ECO:0000353"/>
    <property type="project" value="UniProtKB"/>
</dbReference>
<dbReference type="GO" id="GO:0030971">
    <property type="term" value="F:receptor tyrosine kinase binding"/>
    <property type="evidence" value="ECO:0007669"/>
    <property type="project" value="Ensembl"/>
</dbReference>
<dbReference type="GO" id="GO:0060348">
    <property type="term" value="P:bone development"/>
    <property type="evidence" value="ECO:0000250"/>
    <property type="project" value="UniProtKB"/>
</dbReference>
<dbReference type="GO" id="GO:0045162">
    <property type="term" value="P:clustering of voltage-gated sodium channels"/>
    <property type="evidence" value="ECO:0000250"/>
    <property type="project" value="UniProtKB"/>
</dbReference>
<dbReference type="GO" id="GO:0038133">
    <property type="term" value="P:ERBB2-ERBB3 signaling pathway"/>
    <property type="evidence" value="ECO:0000250"/>
    <property type="project" value="UniProtKB"/>
</dbReference>
<dbReference type="GO" id="GO:0022011">
    <property type="term" value="P:myelination in peripheral nervous system"/>
    <property type="evidence" value="ECO:0000250"/>
    <property type="project" value="UniProtKB"/>
</dbReference>
<dbReference type="GO" id="GO:0001953">
    <property type="term" value="P:negative regulation of cell-matrix adhesion"/>
    <property type="evidence" value="ECO:0000314"/>
    <property type="project" value="UniProtKB"/>
</dbReference>
<dbReference type="GO" id="GO:0035024">
    <property type="term" value="P:negative regulation of Rho protein signal transduction"/>
    <property type="evidence" value="ECO:0000314"/>
    <property type="project" value="UniProtKB"/>
</dbReference>
<dbReference type="GO" id="GO:0051497">
    <property type="term" value="P:negative regulation of stress fiber assembly"/>
    <property type="evidence" value="ECO:0000314"/>
    <property type="project" value="UniProtKB"/>
</dbReference>
<dbReference type="GO" id="GO:0031175">
    <property type="term" value="P:neuron projection development"/>
    <property type="evidence" value="ECO:0000315"/>
    <property type="project" value="UniProtKB"/>
</dbReference>
<dbReference type="GO" id="GO:0035567">
    <property type="term" value="P:non-canonical Wnt signaling pathway"/>
    <property type="evidence" value="ECO:0000315"/>
    <property type="project" value="UniProtKB"/>
</dbReference>
<dbReference type="GO" id="GO:0001649">
    <property type="term" value="P:osteoblast differentiation"/>
    <property type="evidence" value="ECO:0000314"/>
    <property type="project" value="UniProtKB"/>
</dbReference>
<dbReference type="GO" id="GO:0030335">
    <property type="term" value="P:positive regulation of cell migration"/>
    <property type="evidence" value="ECO:0000314"/>
    <property type="project" value="UniProtKB"/>
</dbReference>
<dbReference type="GO" id="GO:0051894">
    <property type="term" value="P:positive regulation of focal adhesion assembly"/>
    <property type="evidence" value="ECO:0000314"/>
    <property type="project" value="UniProtKB"/>
</dbReference>
<dbReference type="GO" id="GO:0046330">
    <property type="term" value="P:positive regulation of JNK cascade"/>
    <property type="evidence" value="ECO:0000315"/>
    <property type="project" value="UniProtKB"/>
</dbReference>
<dbReference type="GO" id="GO:0051901">
    <property type="term" value="P:positive regulation of mitochondrial depolarization"/>
    <property type="evidence" value="ECO:0000314"/>
    <property type="project" value="UniProtKB"/>
</dbReference>
<dbReference type="GO" id="GO:0051897">
    <property type="term" value="P:positive regulation of phosphatidylinositol 3-kinase/protein kinase B signal transduction"/>
    <property type="evidence" value="ECO:0000314"/>
    <property type="project" value="UniProtKB"/>
</dbReference>
<dbReference type="GO" id="GO:0051496">
    <property type="term" value="P:positive regulation of stress fiber assembly"/>
    <property type="evidence" value="ECO:0000314"/>
    <property type="project" value="UniProtKB"/>
</dbReference>
<dbReference type="GO" id="GO:1900026">
    <property type="term" value="P:positive regulation of substrate adhesion-dependent cell spreading"/>
    <property type="evidence" value="ECO:0000314"/>
    <property type="project" value="UniProtKB"/>
</dbReference>
<dbReference type="GO" id="GO:0043408">
    <property type="term" value="P:regulation of MAPK cascade"/>
    <property type="evidence" value="ECO:0000314"/>
    <property type="project" value="UniProtKB"/>
</dbReference>
<dbReference type="GO" id="GO:0007165">
    <property type="term" value="P:signal transduction"/>
    <property type="evidence" value="ECO:0000318"/>
    <property type="project" value="GO_Central"/>
</dbReference>
<dbReference type="GO" id="GO:0014734">
    <property type="term" value="P:skeletal muscle hypertrophy"/>
    <property type="evidence" value="ECO:0000250"/>
    <property type="project" value="UniProtKB"/>
</dbReference>
<dbReference type="Gene3D" id="1.10.287.1490">
    <property type="match status" value="1"/>
</dbReference>
<dbReference type="InterPro" id="IPR003112">
    <property type="entry name" value="Olfac-like_dom"/>
</dbReference>
<dbReference type="InterPro" id="IPR050605">
    <property type="entry name" value="Olfactomedin-like_domain"/>
</dbReference>
<dbReference type="PANTHER" id="PTHR23192:SF33">
    <property type="entry name" value="MYOCILIN"/>
    <property type="match status" value="1"/>
</dbReference>
<dbReference type="PANTHER" id="PTHR23192">
    <property type="entry name" value="OLFACTOMEDIN-RELATED"/>
    <property type="match status" value="1"/>
</dbReference>
<dbReference type="Pfam" id="PF02191">
    <property type="entry name" value="OLF"/>
    <property type="match status" value="1"/>
</dbReference>
<dbReference type="SMART" id="SM00284">
    <property type="entry name" value="OLF"/>
    <property type="match status" value="1"/>
</dbReference>
<dbReference type="PROSITE" id="PS51132">
    <property type="entry name" value="OLF"/>
    <property type="match status" value="1"/>
</dbReference>
<feature type="signal peptide" evidence="44 56">
    <location>
        <begin position="1"/>
        <end position="32"/>
    </location>
</feature>
<feature type="chain" id="PRO_0000020084" description="Myocilin">
    <location>
        <begin position="33"/>
        <end position="504"/>
    </location>
</feature>
<feature type="chain" id="PRO_0000428749" description="Myocilin, N-terminal fragment">
    <location>
        <begin position="33"/>
        <end position="226"/>
    </location>
</feature>
<feature type="chain" id="PRO_0000428750" description="Myocilin, C-terminal fragment">
    <location>
        <begin position="227"/>
        <end position="504"/>
    </location>
</feature>
<feature type="domain" description="Olfactomedin-like" evidence="4">
    <location>
        <begin position="244"/>
        <end position="503"/>
    </location>
</feature>
<feature type="region of interest" description="Disordered" evidence="5">
    <location>
        <begin position="106"/>
        <end position="131"/>
    </location>
</feature>
<feature type="region of interest" description="Disordered" evidence="5">
    <location>
        <begin position="170"/>
        <end position="200"/>
    </location>
</feature>
<feature type="coiled-coil region" evidence="3">
    <location>
        <begin position="74"/>
        <end position="184"/>
    </location>
</feature>
<feature type="short sequence motif" description="Microbody targeting signal" evidence="3">
    <location>
        <begin position="502"/>
        <end position="504"/>
    </location>
</feature>
<feature type="compositionally biased region" description="Basic and acidic residues" evidence="5">
    <location>
        <begin position="122"/>
        <end position="131"/>
    </location>
</feature>
<feature type="binding site" evidence="69 70 71">
    <location>
        <position position="380"/>
    </location>
    <ligand>
        <name>Ca(2+)</name>
        <dbReference type="ChEBI" id="CHEBI:29108"/>
    </ligand>
</feature>
<feature type="binding site" evidence="69 70 71">
    <location>
        <position position="428"/>
    </location>
    <ligand>
        <name>Ca(2+)</name>
        <dbReference type="ChEBI" id="CHEBI:29108"/>
    </ligand>
</feature>
<feature type="binding site" evidence="69 70 71">
    <location>
        <position position="429"/>
    </location>
    <ligand>
        <name>Ca(2+)</name>
        <dbReference type="ChEBI" id="CHEBI:29108"/>
    </ligand>
</feature>
<feature type="binding site" evidence="69 70 71">
    <location>
        <position position="477"/>
    </location>
    <ligand>
        <name>Ca(2+)</name>
        <dbReference type="ChEBI" id="CHEBI:29108"/>
    </ligand>
</feature>
<feature type="binding site" evidence="69 70 71">
    <location>
        <position position="478"/>
    </location>
    <ligand>
        <name>Ca(2+)</name>
        <dbReference type="ChEBI" id="CHEBI:29108"/>
    </ligand>
</feature>
<feature type="site" description="Cleavage; by CAPN2">
    <location>
        <begin position="226"/>
        <end position="227"/>
    </location>
</feature>
<feature type="glycosylation site" description="N-linked (GlcNAc...) asparagine" evidence="68">
    <location>
        <position position="57"/>
    </location>
</feature>
<feature type="disulfide bond" evidence="4 26 69 70 71">
    <location>
        <begin position="245"/>
        <end position="433"/>
    </location>
</feature>
<feature type="sequence variant" id="VAR_009665" description="In GLC1A; uncertain significance; dbSNP:rs1653382909." evidence="6">
    <original>F</original>
    <variation>S</variation>
    <location>
        <position position="4"/>
    </location>
</feature>
<feature type="sequence variant" id="VAR_009666" description="In GLC1A; uncertain significance." evidence="6">
    <original>C</original>
    <variation>S</variation>
    <location>
        <position position="9"/>
    </location>
</feature>
<feature type="sequence variant" id="VAR_009667" description="In dbSNP:rs199752860." evidence="10 23">
    <original>G</original>
    <variation>R</variation>
    <location>
        <position position="12"/>
    </location>
</feature>
<feature type="sequence variant" id="VAR_054269" description="In dbSNP:rs745439002." evidence="23">
    <original>P</original>
    <variation>L</variation>
    <location>
        <position position="16"/>
    </location>
</feature>
<feature type="sequence variant" id="VAR_054270" evidence="23">
    <original>A</original>
    <variation>S</variation>
    <location>
        <position position="17"/>
    </location>
</feature>
<feature type="sequence variant" id="VAR_009668" description="In dbSNP:rs2234925." evidence="14">
    <original>Q</original>
    <variation>H</variation>
    <location>
        <position position="19"/>
    </location>
</feature>
<feature type="sequence variant" id="VAR_054271" description="In GLC1A; uncertain significance; dbSNP:rs755246983." evidence="28">
    <original>C</original>
    <variation>R</variation>
    <location>
        <position position="25"/>
    </location>
</feature>
<feature type="sequence variant" id="VAR_054272" description="In GLC1A and GLC3A; likely benign; the GLC3A patient also carries mutation H-368 in CYP1B1 suggesting digenic inheritance; dbSNP:rs74315339." evidence="30 33">
    <original>Q</original>
    <variation>H</variation>
    <location>
        <position position="48"/>
    </location>
</feature>
<feature type="sequence variant" id="VAR_008969" description="In GLC1A; uncertain significance; dbSNP:rs200208925." evidence="9">
    <original>V</original>
    <variation>A</variation>
    <location>
        <position position="53"/>
    </location>
</feature>
<feature type="sequence variant" id="VAR_054273" description="In GLC1A; uncertain significance." evidence="15">
    <original>N</original>
    <variation>D</variation>
    <location>
        <position position="57"/>
    </location>
</feature>
<feature type="sequence variant" id="VAR_054274" description="Loss of higher molecular weight isoform; dbSNP:rs561439247." evidence="27 29">
    <original>N</original>
    <variation>S</variation>
    <location>
        <position position="57"/>
    </location>
</feature>
<feature type="sequence variant" id="VAR_009669" evidence="6">
    <original>N</original>
    <variation>S</variation>
    <location>
        <position position="73"/>
    </location>
</feature>
<feature type="sequence variant" id="VAR_009670" description="In dbSNP:rs2234926." evidence="10 14 15 22 23 25 29 30 62">
    <original>R</original>
    <variation>K</variation>
    <location>
        <position position="76"/>
    </location>
</feature>
<feature type="sequence variant" id="VAR_054275" evidence="22">
    <original>D</original>
    <variation>E</variation>
    <location>
        <position position="77"/>
    </location>
</feature>
<feature type="sequence variant" id="VAR_009671" description="In GLC1A; likely benign; dbSNP:rs764005392." evidence="59">
    <original>R</original>
    <variation>C</variation>
    <location>
        <position position="82"/>
    </location>
</feature>
<feature type="sequence variant" id="VAR_009672" description="In dbSNP:rs201552559." evidence="6">
    <original>R</original>
    <variation>H</variation>
    <location>
        <position position="82"/>
    </location>
</feature>
<feature type="sequence variant" id="VAR_054276" description="In GLC1A; uncertain significance; dbSNP:rs2102951436." evidence="23">
    <original>L</original>
    <variation>P</variation>
    <location>
        <position position="95"/>
    </location>
</feature>
<feature type="sequence variant" id="VAR_054277" description="In GLC1A; likely benign; dbSNP:rs200120115." evidence="22">
    <original>R</original>
    <variation>W</variation>
    <location>
        <position position="126"/>
    </location>
</feature>
<feature type="sequence variant" id="VAR_054278" description="In GLC1A; likely benign; dbSNP:rs199746824." evidence="14">
    <original>R</original>
    <variation>Q</variation>
    <location>
        <position position="158"/>
    </location>
</feature>
<feature type="sequence variant" id="VAR_009673" description="In dbSNP:rs144579767." evidence="6">
    <original>R</original>
    <variation>Q</variation>
    <location>
        <position position="189"/>
    </location>
</feature>
<feature type="sequence variant" id="VAR_009674" description="In GLC1A; uncertain significance; dbSNP:rs2102945654." evidence="6">
    <original>S</original>
    <variation>F</variation>
    <location>
        <position position="203"/>
    </location>
</feature>
<feature type="sequence variant" id="VAR_014943" description="In GLC1A; likely benign; dbSNP:rs2234927." evidence="10 14 23">
    <original>D</original>
    <variation>E</variation>
    <location>
        <position position="208"/>
    </location>
</feature>
<feature type="sequence variant" id="VAR_054279" description="In dbSNP:rs531050114." evidence="23">
    <original>L</original>
    <variation>P</variation>
    <location>
        <position position="215"/>
    </location>
</feature>
<feature type="sequence variant" id="VAR_054280" description="In GLC1A; uncertain significance; dbSNP:rs757769997." evidence="37">
    <original>G</original>
    <variation>V</variation>
    <location>
        <position position="244"/>
    </location>
</feature>
<feature type="sequence variant" id="VAR_054281" description="In GLC1A; uncertain significance; forms homomultimeric complexes that migrate at molecular weights larger than their wild-type counterparts; these mutant complexes remain sequestered intracellularly; dbSNP:rs74315340." evidence="36">
    <original>C</original>
    <variation>Y</variation>
    <location>
        <position position="245"/>
    </location>
</feature>
<feature type="sequence variant" id="VAR_005468" description="In GLC1A; dbSNP:rs2102944873." evidence="52">
    <original>G</original>
    <variation>R</variation>
    <location>
        <position position="246"/>
    </location>
</feature>
<feature type="sequence variant" id="VAR_054282" description="In GLC1A; dbSNP:rs2102944863." evidence="25">
    <original>V</original>
    <variation>A</variation>
    <location>
        <position position="251"/>
    </location>
</feature>
<feature type="sequence variant" id="VAR_054283" description="In GLC1A; dbSNP:rs74315341." evidence="12 15 20 37">
    <original>G</original>
    <variation>R</variation>
    <location>
        <position position="252"/>
    </location>
</feature>
<feature type="sequence variant" id="VAR_054284" description="In GLC1A; uncertain significance; dbSNP:rs982896610." evidence="13">
    <original>E</original>
    <variation>K</variation>
    <location>
        <position position="261"/>
    </location>
</feature>
<feature type="sequence variant" id="VAR_054285" description="In GLC1A; uncertain significance; dbSNP:rs202176570." evidence="15">
    <original>R</original>
    <variation>G</variation>
    <location>
        <position position="272"/>
    </location>
</feature>
<feature type="sequence variant" id="VAR_054286" description="In GLC1A; uncertain significance." evidence="31">
    <original>P</original>
    <variation>R</variation>
    <location>
        <position position="274"/>
    </location>
</feature>
<feature type="sequence variant" id="VAR_009675" description="In GLC1A; uncertain significance; dbSNP:rs1351328951." evidence="59">
    <original>W</original>
    <variation>R</variation>
    <location>
        <position position="286"/>
    </location>
</feature>
<feature type="sequence variant" id="VAR_009676" description="In GLC1A; likely benign; no effect on protein stability; dbSNP:rs139122673." evidence="20 22 49">
    <original>T</original>
    <variation>K</variation>
    <location>
        <position position="293"/>
    </location>
</feature>
<feature type="sequence variant" id="VAR_054287" description="In GLC1A; uncertain significance; dbSNP:rs748621461." evidence="23">
    <original>E</original>
    <variation>K</variation>
    <location>
        <position position="300"/>
    </location>
</feature>
<feature type="sequence variant" id="VAR_054288" description="In GLC1A; inhibits endoproteolytic processing; mainly accumulates as insoluble aggregates inside the endoplasmic reticulum; dbSNP:rs1652924886." evidence="15 34">
    <original>E</original>
    <variation>K</variation>
    <location>
        <position position="323"/>
    </location>
</feature>
<feature type="sequence variant" id="VAR_009677" description="Slightly decreased protein stability; dbSNP:rs146391864." evidence="15 49">
    <original>V</original>
    <variation>M</variation>
    <location>
        <position position="329"/>
    </location>
</feature>
<feature type="sequence variant" id="VAR_054289" description="In GLC1A; uncertain significance." evidence="13">
    <original>Q</original>
    <variation>E</variation>
    <location>
        <position position="337"/>
    </location>
</feature>
<feature type="sequence variant" id="VAR_005469" description="In GLC1A; uncertain significance; dbSNP:rs74315335." evidence="54">
    <original>Q</original>
    <variation>R</variation>
    <location>
        <position position="337"/>
    </location>
</feature>
<feature type="sequence variant" id="VAR_054290" description="In GLC1A; dbSNP:rs1572210748." evidence="57">
    <original>S</original>
    <variation>P</variation>
    <location>
        <position position="341"/>
    </location>
</feature>
<feature type="sequence variant" id="VAR_054291" description="In GLC1A; uncertain significance." evidence="24">
    <original>R</original>
    <variation>K</variation>
    <location>
        <position position="342"/>
    </location>
</feature>
<feature type="sequence variant" id="VAR_054292" description="In GLC1A; uncertain significance." evidence="25">
    <original>I</original>
    <variation>M</variation>
    <location>
        <position position="345"/>
    </location>
</feature>
<feature type="sequence variant" id="VAR_009678" description="In GLC1A; benign; dbSNP:rs61745146." evidence="22 61">
    <original>E</original>
    <variation>K</variation>
    <location>
        <position position="352"/>
    </location>
</feature>
<feature type="sequence variant" id="VAR_009679" description="In GLC1A; likely benign; no significant effect on protein stability; dbSNP:rs137853277." evidence="7 10 23 49">
    <original>T</original>
    <variation>I</variation>
    <location>
        <position position="353"/>
    </location>
</feature>
<feature type="sequence variant" id="VAR_054293" description="In GLC1A; uncertain significance; dbSNP:rs1652920956." evidence="14 32">
    <original>I</original>
    <variation>N</variation>
    <location>
        <position position="360"/>
    </location>
</feature>
<feature type="sequence variant" id="VAR_009680" description="In GLC1A; uncertain significance; dbSNP:rs1344039930." evidence="59">
    <original>P</original>
    <variation>S</variation>
    <location>
        <position position="361"/>
    </location>
</feature>
<feature type="sequence variant" id="VAR_054294" description="In GLC1A; dbSNP:rs2102944665." evidence="14 32">
    <original>A</original>
    <variation>T</variation>
    <location>
        <position position="363"/>
    </location>
</feature>
<feature type="sequence variant" id="VAR_005470" description="In GLC1A; dbSNP:rs121909193." evidence="50">
    <original>G</original>
    <variation>V</variation>
    <location>
        <position position="364"/>
    </location>
</feature>
<feature type="sequence variant" id="VAR_005471" description="In GLC1A; dbSNP:rs74315334." evidence="20 22 25 29 53 55 58">
    <original>G</original>
    <variation>R</variation>
    <location>
        <position position="367"/>
    </location>
</feature>
<feature type="sequence variant" id="VAR_054295" description="In GLC1A; uncertain significance." evidence="32">
    <original>F</original>
    <variation>L</variation>
    <location>
        <position position="369"/>
    </location>
</feature>
<feature type="sequence variant" id="VAR_005472" description="In GLC1A; severe form; inhibits endoproteolytic processing; produced the highest inhibition of the endoproteolytic processing; mainly accumulates as insoluble aggregates inside the endoplasmic reticulum; inhibits neurite outgrowth; dbSNP:rs74315330." evidence="15 20 25 34 52 53 55 61 62">
    <original>P</original>
    <variation>L</variation>
    <location>
        <position position="370"/>
    </location>
</feature>
<feature type="sequence variant" id="VAR_054296" description="In GLC1A; uncertain significance." evidence="20">
    <original>T</original>
    <variation>K</variation>
    <location>
        <position position="377"/>
    </location>
</feature>
<feature type="sequence variant" id="VAR_009681" description="In GLC1A; dbSNP:rs566289099." evidence="15 61">
    <original>T</original>
    <variation>M</variation>
    <location>
        <position position="377"/>
    </location>
</feature>
<feature type="sequence variant" id="VAR_009682" description="In GLC1A; incomplete penetrance; inhibits endoproteolytic processing; mainly accumulates as insoluble aggregates inside the endoplasmic reticulum; dbSNP:rs2102944632." evidence="62">
    <original>D</original>
    <variation>A</variation>
    <location>
        <position position="380"/>
    </location>
</feature>
<feature type="sequence variant" id="VAR_009683" description="In GLC1A; uncertain significance; dbSNP:rs2102944632." evidence="34">
    <original>D</original>
    <variation>G</variation>
    <location>
        <position position="380"/>
    </location>
</feature>
<feature type="sequence variant" id="VAR_054297" description="In GLC1A; dbSNP:rs121909194." evidence="38">
    <original>D</original>
    <variation>H</variation>
    <location>
        <position position="380"/>
    </location>
</feature>
<feature type="sequence variant" id="VAR_054298" description="In GLC1A; uncertain significance; dbSNP:rs121909194." evidence="24">
    <original>D</original>
    <variation>N</variation>
    <location>
        <position position="380"/>
    </location>
</feature>
<feature type="sequence variant" id="VAR_054299" description="In GLC1A; uncertain significance." evidence="25">
    <original>S</original>
    <variation>N</variation>
    <location>
        <position position="393"/>
    </location>
</feature>
<feature type="sequence variant" id="VAR_009684" description="In GLC1A; uncertain significance; dbSNP:rs998968146." evidence="6">
    <original>S</original>
    <variation>R</variation>
    <location>
        <position position="393"/>
    </location>
</feature>
<feature type="sequence variant" id="VAR_009685" description="In dbSNP:rs56314834." evidence="13 15 20 22 29">
    <original>K</original>
    <variation>R</variation>
    <location>
        <position position="398"/>
    </location>
</feature>
<feature type="sequence variant" id="VAR_054300" description="In GLC1A; uncertain significance; dbSNP:rs28936694." evidence="20">
    <original>G</original>
    <variation>V</variation>
    <location>
        <position position="399"/>
    </location>
</feature>
<feature type="sequence variant" id="VAR_009686">
    <original>V</original>
    <variation>I</variation>
    <location>
        <position position="402"/>
    </location>
</feature>
<feature type="sequence variant" id="VAR_054301" description="In GLC1A; uncertain significance; dbSNP:rs1351097164." evidence="23">
    <original>E</original>
    <variation>K</variation>
    <location>
        <position position="414"/>
    </location>
</feature>
<feature type="sequence variant" id="VAR_009687" description="In GLC1A; uncertain significance; no effect on protein stability; dbSNP:rs751113505." evidence="6 49">
    <original>R</original>
    <variation>C</variation>
    <location>
        <position position="422"/>
    </location>
</feature>
<feature type="sequence variant" id="VAR_009688" description="In GLC1A; uncertain significance; dbSNP:rs201573718." evidence="59">
    <original>R</original>
    <variation>H</variation>
    <location>
        <position position="422"/>
    </location>
</feature>
<feature type="sequence variant" id="VAR_009689" description="In GLC1A; heterozygote specific phenotype; dbSNP:rs74315336." evidence="22 28 60">
    <original>K</original>
    <variation>E</variation>
    <location>
        <position position="423"/>
    </location>
</feature>
<feature type="sequence variant" id="VAR_009690" description="Decreases protein stability." evidence="49">
    <original>S</original>
    <variation>P</variation>
    <location>
        <position position="425"/>
    </location>
</feature>
<feature type="sequence variant" id="VAR_005473" description="In GLC1A; dbSNP:rs2102944566." evidence="15 58">
    <original>V</original>
    <variation>F</variation>
    <location>
        <position position="426"/>
    </location>
</feature>
<feature type="sequence variant" id="VAR_054302" description="In GLC1A; uncertain significance; dbSNP:rs754237376." evidence="22">
    <original>A</original>
    <variation>T</variation>
    <location>
        <position position="427"/>
    </location>
</feature>
<feature type="sequence variant" id="VAR_008970" description="In GLC1A; severe form; dbSNP:rs74315338." evidence="11">
    <original>C</original>
    <variation>R</variation>
    <location>
        <position position="433"/>
    </location>
</feature>
<feature type="sequence variant" id="VAR_054303" description="In GLC1A; uncertain significance; dbSNP:rs1200513428." evidence="25">
    <original>G</original>
    <variation>S</variation>
    <location>
        <position position="434"/>
    </location>
</feature>
<feature type="sequence variant" id="VAR_005474" description="In GLC1A; dbSNP:rs74315328." evidence="50 61">
    <original>Y</original>
    <variation>H</variation>
    <location>
        <position position="437"/>
    </location>
</feature>
<feature type="sequence variant" id="VAR_054304" description="In GLC1A." evidence="29">
    <original>T</original>
    <variation>I</variation>
    <location>
        <position position="438"/>
    </location>
</feature>
<feature type="sequence variant" id="VAR_009691" description="In GLC1A; likely benign; no effect on protein stability; dbSNP:rs140967767." evidence="20 22 49">
    <original>A</original>
    <variation>V</variation>
    <location>
        <position position="445"/>
    </location>
</feature>
<feature type="sequence variant" id="VAR_054305" description="In GLC1A; uncertain significance." evidence="8 32">
    <original>T</original>
    <variation>P</variation>
    <location>
        <position position="448"/>
    </location>
</feature>
<feature type="sequence variant" id="VAR_054306" description="In GLC1A; uncertain significance." evidence="25">
    <original>N</original>
    <variation>D</variation>
    <location>
        <position position="450"/>
    </location>
</feature>
<feature type="sequence variant" id="VAR_009692" description="In GLC1A; uncertain significance." evidence="6">
    <original>I</original>
    <variation>M</variation>
    <location>
        <position position="465"/>
    </location>
</feature>
<feature type="sequence variant" id="VAR_009693" description="In GLC1A; uncertain significance; dbSNP:rs771122834." evidence="25">
    <original>R</original>
    <variation>C</variation>
    <location>
        <position position="470"/>
    </location>
</feature>
<feature type="sequence variant" id="VAR_054307" description="In dbSNP:rs750791099." evidence="14">
    <original>R</original>
    <variation>H</variation>
    <location>
        <position position="470"/>
    </location>
</feature>
<feature type="sequence variant" id="VAR_054308" description="In GLC1A; uncertain significance; dbSNP:rs554235897." evidence="23">
    <original>Y</original>
    <variation>C</variation>
    <location>
        <position position="471"/>
    </location>
</feature>
<feature type="sequence variant" id="VAR_009694" description="No effect on protein stability." evidence="49">
    <original>Y</original>
    <variation>C</variation>
    <location>
        <position position="473"/>
    </location>
</feature>
<feature type="sequence variant" id="VAR_009695" description="In GLC1A; induces stress fiber formation in only 5% of cells; dbSNP:rs74315331." evidence="15 43">
    <original>I</original>
    <variation>N</variation>
    <location>
        <position position="477"/>
    </location>
</feature>
<feature type="sequence variant" id="VAR_005475" description="In GLC1A; uncertain significance; dbSNP:rs74315331." evidence="52">
    <original>I</original>
    <variation>S</variation>
    <location>
        <position position="477"/>
    </location>
</feature>
<feature type="sequence variant" id="VAR_005476" description="In GLC1A; dbSNP:rs74315332." evidence="29 52">
    <original>N</original>
    <variation>K</variation>
    <location>
        <position position="480"/>
    </location>
</feature>
<feature type="sequence variant" id="VAR_009696" description="In GLC1A; dbSNP:rs2102944466." evidence="6 22">
    <original>P</original>
    <variation>L</variation>
    <location>
        <position position="481"/>
    </location>
</feature>
<feature type="sequence variant" id="VAR_009697" description="In GLC1A; uncertain significance; dbSNP:rs763068244." evidence="6">
    <original>P</original>
    <variation>T</variation>
    <location>
        <position position="481"/>
    </location>
</feature>
<feature type="sequence variant" id="VAR_009698" description="In GLC1A; uncertain significance; dbSNP:rs2102944447." evidence="6">
    <original>V</original>
    <variation>I</variation>
    <location>
        <position position="495"/>
    </location>
</feature>
<feature type="sequence variant" id="VAR_005477" description="In GLC1A; dbSNP:rs2102944440." evidence="29 52">
    <original>I</original>
    <variation>F</variation>
    <location>
        <position position="499"/>
    </location>
</feature>
<feature type="sequence variant" id="VAR_054309" description="In GLC1A; uncertain significance; dbSNP:rs2102944438." evidence="15">
    <original>I</original>
    <variation>S</variation>
    <location>
        <position position="499"/>
    </location>
</feature>
<feature type="sequence variant" id="VAR_009699" description="In GLC1A; likely benign; dbSNP:rs145977437." evidence="6">
    <original>K</original>
    <variation>R</variation>
    <location>
        <position position="500"/>
    </location>
</feature>
<feature type="sequence variant" id="VAR_009700" description="In GLC1A; uncertain significance; dbSNP:rs2102944436." evidence="62">
    <original>S</original>
    <variation>P</variation>
    <location>
        <position position="502"/>
    </location>
</feature>
<feature type="mutagenesis site" description="Impairs endoproteolytic processing." evidence="40">
    <location>
        <begin position="226"/>
        <end position="230"/>
    </location>
</feature>
<feature type="mutagenesis site" description="Reduced processing. Impairs endoproteolytic processing; when associated with A-229 or A-230. Completely processed after 6 days of expression, and releases a C-terminal fragment with similar electrophoretic mobility to that obtained by processing wild-type myocilin; when associated with A-229 or A-230." evidence="40">
    <original>R</original>
    <variation>A</variation>
    <location>
        <position position="226"/>
    </location>
</feature>
<feature type="mutagenesis site" description="Slightly increases endoproteolytic processing." evidence="40">
    <original>R</original>
    <variation>Q</variation>
    <location>
        <position position="226"/>
    </location>
</feature>
<feature type="mutagenesis site" description="Reduced processing." evidence="40">
    <original>I</original>
    <variation>G</variation>
    <location>
        <position position="227"/>
    </location>
</feature>
<feature type="mutagenesis site" description="Completely blocks endoproteolytic processing; when associated with A-226. Completely processed after 6 days of expression, and releases a C-terminal fragment with similar electrophoretic mobility to that obtained by processing wild-type myocilin; when associated with A-226." evidence="40">
    <original>K</original>
    <variation>A</variation>
    <location>
        <position position="229"/>
    </location>
</feature>
<feature type="mutagenesis site" description="Impairs endoproteolytic processing; when associated with A-226. Completely processed after 6 days of expression, and released a C-terminal fragment with similar electrophoretic mobility to that obtained by processing wild-type myocilin; when associated with A-226." evidence="40">
    <original>E</original>
    <variation>A</variation>
    <location>
        <position position="230"/>
    </location>
</feature>
<feature type="strand" evidence="75">
    <location>
        <begin position="248"/>
        <end position="251"/>
    </location>
</feature>
<feature type="strand" evidence="75">
    <location>
        <begin position="255"/>
        <end position="259"/>
    </location>
</feature>
<feature type="helix" evidence="75">
    <location>
        <begin position="263"/>
        <end position="265"/>
    </location>
</feature>
<feature type="strand" evidence="75">
    <location>
        <begin position="266"/>
        <end position="271"/>
    </location>
</feature>
<feature type="strand" evidence="75">
    <location>
        <begin position="285"/>
        <end position="289"/>
    </location>
</feature>
<feature type="strand" evidence="74">
    <location>
        <begin position="292"/>
        <end position="294"/>
    </location>
</feature>
<feature type="strand" evidence="75">
    <location>
        <begin position="297"/>
        <end position="303"/>
    </location>
</feature>
<feature type="helix" evidence="75">
    <location>
        <begin position="304"/>
        <end position="309"/>
    </location>
</feature>
<feature type="strand" evidence="75">
    <location>
        <begin position="313"/>
        <end position="317"/>
    </location>
</feature>
<feature type="strand" evidence="74">
    <location>
        <begin position="322"/>
        <end position="325"/>
    </location>
</feature>
<feature type="strand" evidence="75">
    <location>
        <begin position="328"/>
        <end position="330"/>
    </location>
</feature>
<feature type="strand" evidence="75">
    <location>
        <begin position="333"/>
        <end position="338"/>
    </location>
</feature>
<feature type="strand" evidence="75">
    <location>
        <begin position="341"/>
        <end position="348"/>
    </location>
</feature>
<feature type="turn" evidence="75">
    <location>
        <begin position="349"/>
        <end position="352"/>
    </location>
</feature>
<feature type="strand" evidence="75">
    <location>
        <begin position="353"/>
        <end position="359"/>
    </location>
</feature>
<feature type="strand" evidence="75">
    <location>
        <begin position="366"/>
        <end position="369"/>
    </location>
</feature>
<feature type="turn" evidence="72">
    <location>
        <begin position="375"/>
        <end position="378"/>
    </location>
</feature>
<feature type="strand" evidence="75">
    <location>
        <begin position="380"/>
        <end position="384"/>
    </location>
</feature>
<feature type="strand" evidence="75">
    <location>
        <begin position="387"/>
        <end position="392"/>
    </location>
</feature>
<feature type="turn" evidence="75">
    <location>
        <begin position="395"/>
        <end position="399"/>
    </location>
</feature>
<feature type="strand" evidence="75">
    <location>
        <begin position="400"/>
        <end position="406"/>
    </location>
</feature>
<feature type="turn" evidence="75">
    <location>
        <begin position="408"/>
        <end position="410"/>
    </location>
</feature>
<feature type="strand" evidence="75">
    <location>
        <begin position="413"/>
        <end position="422"/>
    </location>
</feature>
<feature type="helix" evidence="75">
    <location>
        <begin position="423"/>
        <end position="425"/>
    </location>
</feature>
<feature type="strand" evidence="75">
    <location>
        <begin position="426"/>
        <end position="432"/>
    </location>
</feature>
<feature type="strand" evidence="75">
    <location>
        <begin position="435"/>
        <end position="440"/>
    </location>
</feature>
<feature type="strand" evidence="73">
    <location>
        <begin position="442"/>
        <end position="445"/>
    </location>
</feature>
<feature type="strand" evidence="75">
    <location>
        <begin position="447"/>
        <end position="454"/>
    </location>
</feature>
<feature type="turn" evidence="75">
    <location>
        <begin position="455"/>
        <end position="457"/>
    </location>
</feature>
<feature type="strand" evidence="75">
    <location>
        <begin position="460"/>
        <end position="467"/>
    </location>
</feature>
<feature type="strand" evidence="73">
    <location>
        <begin position="470"/>
        <end position="473"/>
    </location>
</feature>
<feature type="strand" evidence="75">
    <location>
        <begin position="474"/>
        <end position="480"/>
    </location>
</feature>
<feature type="turn" evidence="75">
    <location>
        <begin position="481"/>
        <end position="484"/>
    </location>
</feature>
<feature type="strand" evidence="75">
    <location>
        <begin position="485"/>
        <end position="490"/>
    </location>
</feature>
<feature type="strand" evidence="75">
    <location>
        <begin position="493"/>
        <end position="501"/>
    </location>
</feature>
<name>MYOC_HUMAN</name>
<evidence type="ECO:0000250" key="1">
    <source>
        <dbReference type="UniProtKB" id="O70624"/>
    </source>
</evidence>
<evidence type="ECO:0000250" key="2">
    <source>
        <dbReference type="UniProtKB" id="Q2PT31"/>
    </source>
</evidence>
<evidence type="ECO:0000255" key="3"/>
<evidence type="ECO:0000255" key="4">
    <source>
        <dbReference type="PROSITE-ProRule" id="PRU00446"/>
    </source>
</evidence>
<evidence type="ECO:0000256" key="5">
    <source>
        <dbReference type="SAM" id="MobiDB-lite"/>
    </source>
</evidence>
<evidence type="ECO:0000269" key="6">
    <source>
    </source>
</evidence>
<evidence type="ECO:0000269" key="7">
    <source>
    </source>
</evidence>
<evidence type="ECO:0000269" key="8">
    <source>
    </source>
</evidence>
<evidence type="ECO:0000269" key="9">
    <source>
    </source>
</evidence>
<evidence type="ECO:0000269" key="10">
    <source>
    </source>
</evidence>
<evidence type="ECO:0000269" key="11">
    <source>
    </source>
</evidence>
<evidence type="ECO:0000269" key="12">
    <source>
    </source>
</evidence>
<evidence type="ECO:0000269" key="13">
    <source>
    </source>
</evidence>
<evidence type="ECO:0000269" key="14">
    <source>
    </source>
</evidence>
<evidence type="ECO:0000269" key="15">
    <source>
    </source>
</evidence>
<evidence type="ECO:0000269" key="16">
    <source>
    </source>
</evidence>
<evidence type="ECO:0000269" key="17">
    <source>
    </source>
</evidence>
<evidence type="ECO:0000269" key="18">
    <source>
    </source>
</evidence>
<evidence type="ECO:0000269" key="19">
    <source>
    </source>
</evidence>
<evidence type="ECO:0000269" key="20">
    <source>
    </source>
</evidence>
<evidence type="ECO:0000269" key="21">
    <source>
    </source>
</evidence>
<evidence type="ECO:0000269" key="22">
    <source>
    </source>
</evidence>
<evidence type="ECO:0000269" key="23">
    <source>
    </source>
</evidence>
<evidence type="ECO:0000269" key="24">
    <source>
    </source>
</evidence>
<evidence type="ECO:0000269" key="25">
    <source>
    </source>
</evidence>
<evidence type="ECO:0000269" key="26">
    <source>
    </source>
</evidence>
<evidence type="ECO:0000269" key="27">
    <source>
    </source>
</evidence>
<evidence type="ECO:0000269" key="28">
    <source>
    </source>
</evidence>
<evidence type="ECO:0000269" key="29">
    <source>
    </source>
</evidence>
<evidence type="ECO:0000269" key="30">
    <source>
    </source>
</evidence>
<evidence type="ECO:0000269" key="31">
    <source>
    </source>
</evidence>
<evidence type="ECO:0000269" key="32">
    <source>
    </source>
</evidence>
<evidence type="ECO:0000269" key="33">
    <source>
    </source>
</evidence>
<evidence type="ECO:0000269" key="34">
    <source>
    </source>
</evidence>
<evidence type="ECO:0000269" key="35">
    <source>
    </source>
</evidence>
<evidence type="ECO:0000269" key="36">
    <source>
    </source>
</evidence>
<evidence type="ECO:0000269" key="37">
    <source>
    </source>
</evidence>
<evidence type="ECO:0000269" key="38">
    <source>
    </source>
</evidence>
<evidence type="ECO:0000269" key="39">
    <source>
    </source>
</evidence>
<evidence type="ECO:0000269" key="40">
    <source>
    </source>
</evidence>
<evidence type="ECO:0000269" key="41">
    <source>
    </source>
</evidence>
<evidence type="ECO:0000269" key="42">
    <source>
    </source>
</evidence>
<evidence type="ECO:0000269" key="43">
    <source>
    </source>
</evidence>
<evidence type="ECO:0000269" key="44">
    <source>
    </source>
</evidence>
<evidence type="ECO:0000269" key="45">
    <source>
    </source>
</evidence>
<evidence type="ECO:0000269" key="46">
    <source>
    </source>
</evidence>
<evidence type="ECO:0000269" key="47">
    <source>
    </source>
</evidence>
<evidence type="ECO:0000269" key="48">
    <source>
    </source>
</evidence>
<evidence type="ECO:0000269" key="49">
    <source>
    </source>
</evidence>
<evidence type="ECO:0000269" key="50">
    <source>
    </source>
</evidence>
<evidence type="ECO:0000269" key="51">
    <source>
    </source>
</evidence>
<evidence type="ECO:0000269" key="52">
    <source>
    </source>
</evidence>
<evidence type="ECO:0000269" key="53">
    <source>
    </source>
</evidence>
<evidence type="ECO:0000269" key="54">
    <source>
    </source>
</evidence>
<evidence type="ECO:0000269" key="55">
    <source>
    </source>
</evidence>
<evidence type="ECO:0000269" key="56">
    <source>
    </source>
</evidence>
<evidence type="ECO:0000269" key="57">
    <source>
    </source>
</evidence>
<evidence type="ECO:0000269" key="58">
    <source>
    </source>
</evidence>
<evidence type="ECO:0000269" key="59">
    <source>
    </source>
</evidence>
<evidence type="ECO:0000269" key="60">
    <source>
    </source>
</evidence>
<evidence type="ECO:0000269" key="61">
    <source>
    </source>
</evidence>
<evidence type="ECO:0000269" key="62">
    <source>
    </source>
</evidence>
<evidence type="ECO:0000303" key="63">
    <source>
    </source>
</evidence>
<evidence type="ECO:0000303" key="64">
    <source>
    </source>
</evidence>
<evidence type="ECO:0000303" key="65">
    <source>
    </source>
</evidence>
<evidence type="ECO:0000305" key="66"/>
<evidence type="ECO:0000305" key="67">
    <source>
    </source>
</evidence>
<evidence type="ECO:0000305" key="68">
    <source>
    </source>
</evidence>
<evidence type="ECO:0007744" key="69">
    <source>
        <dbReference type="PDB" id="4WXQ"/>
    </source>
</evidence>
<evidence type="ECO:0007744" key="70">
    <source>
        <dbReference type="PDB" id="4WXS"/>
    </source>
</evidence>
<evidence type="ECO:0007744" key="71">
    <source>
        <dbReference type="PDB" id="4WXU"/>
    </source>
</evidence>
<evidence type="ECO:0007829" key="72">
    <source>
        <dbReference type="PDB" id="4WXU"/>
    </source>
</evidence>
<evidence type="ECO:0007829" key="73">
    <source>
        <dbReference type="PDB" id="6OU3"/>
    </source>
</evidence>
<evidence type="ECO:0007829" key="74">
    <source>
        <dbReference type="PDB" id="6PKF"/>
    </source>
</evidence>
<evidence type="ECO:0007829" key="75">
    <source>
        <dbReference type="PDB" id="7SKE"/>
    </source>
</evidence>
<gene>
    <name type="primary">MYOC</name>
    <name type="synonym">GLC1A</name>
    <name evidence="64" type="synonym">TIGR</name>
</gene>
<protein>
    <recommendedName>
        <fullName evidence="63">Myocilin</fullName>
    </recommendedName>
    <alternativeName>
        <fullName>Myocilin 55 kDa subunit</fullName>
    </alternativeName>
    <alternativeName>
        <fullName evidence="65">Trabecular meshwork-induced glucocorticoid response protein</fullName>
    </alternativeName>
    <component>
        <recommendedName>
            <fullName>Myocilin, N-terminal fragment</fullName>
        </recommendedName>
        <alternativeName>
            <fullName>Myocilin 20 kDa N-terminal fragment</fullName>
        </alternativeName>
    </component>
    <component>
        <recommendedName>
            <fullName>Myocilin, C-terminal fragment</fullName>
        </recommendedName>
        <alternativeName>
            <fullName>Myocilin 35 kDa N-terminal fragment</fullName>
        </alternativeName>
    </component>
</protein>
<accession>Q99972</accession>
<accession>B2RD84</accession>
<accession>O00620</accession>
<accession>Q7Z6Q9</accession>
<proteinExistence type="evidence at protein level"/>
<reference key="1">
    <citation type="journal article" date="1997" name="FEBS Lett.">
        <title>Cloning and characterization of subtracted cDNAs from a human ciliary body library encoding TIGR, a protein involved in juvenile open angle glaucoma with homology to myosin and olfactomedin.</title>
        <authorList>
            <person name="Ortego J."/>
            <person name="Escribano J."/>
            <person name="Coca-Prados M."/>
        </authorList>
    </citation>
    <scope>NUCLEOTIDE SEQUENCE [MRNA]</scope>
</reference>
<reference key="2">
    <citation type="journal article" date="1997" name="Genomics">
        <title>A novel myosin-like protein (myocilin) expressed in the connecting cilium of the photoreceptor: molecular cloning, tissue expression, and chromosomal mapping.</title>
        <authorList>
            <person name="Kubota R."/>
            <person name="Noda S."/>
            <person name="Wang Y."/>
            <person name="Minoshima S."/>
            <person name="Asakawa S."/>
            <person name="Kudoh J."/>
            <person name="Mashima Y."/>
            <person name="Oguchi Y."/>
            <person name="Shimizu N."/>
        </authorList>
    </citation>
    <scope>NUCLEOTIDE SEQUENCE [MRNA]</scope>
    <scope>SUBCELLULAR LOCATION</scope>
    <source>
        <tissue>Retina</tissue>
    </source>
</reference>
<reference key="3">
    <citation type="journal article" date="1997" name="Hum. Mol. Genet.">
        <title>Recurrent mutations in a single exon encoding the evolutionarily conserved olfactomedin-homology domain of TIGR in familial open-angle glaucoma.</title>
        <authorList>
            <person name="Adam M.F."/>
            <person name="Belmouden A."/>
            <person name="Binisti P."/>
            <person name="Brezin A.P."/>
            <person name="Valtot F."/>
            <person name="Bechetoille A."/>
            <person name="Dascotte J.-C."/>
            <person name="Copin B."/>
            <person name="Gomez L."/>
            <person name="Chaventre A."/>
            <person name="Bach J.-F."/>
            <person name="Garchon H.-J."/>
        </authorList>
    </citation>
    <scope>NUCLEOTIDE SEQUENCE [GENOMIC DNA]</scope>
    <scope>VARIANTS GLC1A ARG-246; LEU-370; SER-477; LYS-480 AND PHE-499</scope>
    <source>
        <tissue>Leukocyte</tissue>
    </source>
</reference>
<reference key="4">
    <citation type="journal article" date="1997" name="Science">
        <title>Identification of a gene that causes primary open angle glaucoma.</title>
        <authorList>
            <person name="Stone E.M."/>
            <person name="Fingert J.H."/>
            <person name="Alward W.L.M."/>
            <person name="Nguyen T.D."/>
            <person name="Polansky J.R."/>
            <person name="Sunden S.L.F."/>
            <person name="Nishimura D."/>
            <person name="Clark A.F."/>
            <person name="Nystuen A."/>
            <person name="Nichols B.E."/>
            <person name="Mackey D.A."/>
            <person name="Ritch R."/>
            <person name="Kalenak J.W."/>
            <person name="Craven E.R."/>
            <person name="Sheffield V.C."/>
        </authorList>
    </citation>
    <scope>NUCLEOTIDE SEQUENCE [GENOMIC DNA / MRNA]</scope>
    <scope>VARIANTS GLC1A VAL-364 AND HIS-437</scope>
</reference>
<reference key="5">
    <citation type="journal article" date="1998" name="Biochem. Biophys. Res. Commun.">
        <title>Genomic organization of the human myocilin gene (MYOC) responsible for primary open angle glaucoma (GLC1A).</title>
        <authorList>
            <person name="Kubota R."/>
            <person name="Kudoh J."/>
            <person name="Mashima Y."/>
            <person name="Asakawa S."/>
            <person name="Minoshima S."/>
            <person name="Hejtmancik J.F."/>
            <person name="Oguchi Y."/>
            <person name="Shimizu N."/>
        </authorList>
    </citation>
    <scope>NUCLEOTIDE SEQUENCE [GENOMIC DNA]</scope>
</reference>
<reference key="6">
    <citation type="journal article" date="1998" name="Genome Res.">
        <title>Characterization and comparison of the human and mouse GLC1A glaucoma genes.</title>
        <authorList>
            <person name="Fingert J.H."/>
            <person name="Ying L."/>
            <person name="Swiderski R.E."/>
            <person name="Nystuen A.M."/>
            <person name="Arbour N.C."/>
            <person name="Alward W.L.M."/>
            <person name="Sheffield V.C."/>
            <person name="Stone E.M."/>
        </authorList>
    </citation>
    <scope>NUCLEOTIDE SEQUENCE [GENOMIC DNA]</scope>
</reference>
<reference key="7">
    <citation type="journal article" date="2004" name="Nat. Genet.">
        <title>Complete sequencing and characterization of 21,243 full-length human cDNAs.</title>
        <authorList>
            <person name="Ota T."/>
            <person name="Suzuki Y."/>
            <person name="Nishikawa T."/>
            <person name="Otsuki T."/>
            <person name="Sugiyama T."/>
            <person name="Irie R."/>
            <person name="Wakamatsu A."/>
            <person name="Hayashi K."/>
            <person name="Sato H."/>
            <person name="Nagai K."/>
            <person name="Kimura K."/>
            <person name="Makita H."/>
            <person name="Sekine M."/>
            <person name="Obayashi M."/>
            <person name="Nishi T."/>
            <person name="Shibahara T."/>
            <person name="Tanaka T."/>
            <person name="Ishii S."/>
            <person name="Yamamoto J."/>
            <person name="Saito K."/>
            <person name="Kawai Y."/>
            <person name="Isono Y."/>
            <person name="Nakamura Y."/>
            <person name="Nagahari K."/>
            <person name="Murakami K."/>
            <person name="Yasuda T."/>
            <person name="Iwayanagi T."/>
            <person name="Wagatsuma M."/>
            <person name="Shiratori A."/>
            <person name="Sudo H."/>
            <person name="Hosoiri T."/>
            <person name="Kaku Y."/>
            <person name="Kodaira H."/>
            <person name="Kondo H."/>
            <person name="Sugawara M."/>
            <person name="Takahashi M."/>
            <person name="Kanda K."/>
            <person name="Yokoi T."/>
            <person name="Furuya T."/>
            <person name="Kikkawa E."/>
            <person name="Omura Y."/>
            <person name="Abe K."/>
            <person name="Kamihara K."/>
            <person name="Katsuta N."/>
            <person name="Sato K."/>
            <person name="Tanikawa M."/>
            <person name="Yamazaki M."/>
            <person name="Ninomiya K."/>
            <person name="Ishibashi T."/>
            <person name="Yamashita H."/>
            <person name="Murakawa K."/>
            <person name="Fujimori K."/>
            <person name="Tanai H."/>
            <person name="Kimata M."/>
            <person name="Watanabe M."/>
            <person name="Hiraoka S."/>
            <person name="Chiba Y."/>
            <person name="Ishida S."/>
            <person name="Ono Y."/>
            <person name="Takiguchi S."/>
            <person name="Watanabe S."/>
            <person name="Yosida M."/>
            <person name="Hotuta T."/>
            <person name="Kusano J."/>
            <person name="Kanehori K."/>
            <person name="Takahashi-Fujii A."/>
            <person name="Hara H."/>
            <person name="Tanase T.-O."/>
            <person name="Nomura Y."/>
            <person name="Togiya S."/>
            <person name="Komai F."/>
            <person name="Hara R."/>
            <person name="Takeuchi K."/>
            <person name="Arita M."/>
            <person name="Imose N."/>
            <person name="Musashino K."/>
            <person name="Yuuki H."/>
            <person name="Oshima A."/>
            <person name="Sasaki N."/>
            <person name="Aotsuka S."/>
            <person name="Yoshikawa Y."/>
            <person name="Matsunawa H."/>
            <person name="Ichihara T."/>
            <person name="Shiohata N."/>
            <person name="Sano S."/>
            <person name="Moriya S."/>
            <person name="Momiyama H."/>
            <person name="Satoh N."/>
            <person name="Takami S."/>
            <person name="Terashima Y."/>
            <person name="Suzuki O."/>
            <person name="Nakagawa S."/>
            <person name="Senoh A."/>
            <person name="Mizoguchi H."/>
            <person name="Goto Y."/>
            <person name="Shimizu F."/>
            <person name="Wakebe H."/>
            <person name="Hishigaki H."/>
            <person name="Watanabe T."/>
            <person name="Sugiyama A."/>
            <person name="Takemoto M."/>
            <person name="Kawakami B."/>
            <person name="Yamazaki M."/>
            <person name="Watanabe K."/>
            <person name="Kumagai A."/>
            <person name="Itakura S."/>
            <person name="Fukuzumi Y."/>
            <person name="Fujimori Y."/>
            <person name="Komiyama M."/>
            <person name="Tashiro H."/>
            <person name="Tanigami A."/>
            <person name="Fujiwara T."/>
            <person name="Ono T."/>
            <person name="Yamada K."/>
            <person name="Fujii Y."/>
            <person name="Ozaki K."/>
            <person name="Hirao M."/>
            <person name="Ohmori Y."/>
            <person name="Kawabata A."/>
            <person name="Hikiji T."/>
            <person name="Kobatake N."/>
            <person name="Inagaki H."/>
            <person name="Ikema Y."/>
            <person name="Okamoto S."/>
            <person name="Okitani R."/>
            <person name="Kawakami T."/>
            <person name="Noguchi S."/>
            <person name="Itoh T."/>
            <person name="Shigeta K."/>
            <person name="Senba T."/>
            <person name="Matsumura K."/>
            <person name="Nakajima Y."/>
            <person name="Mizuno T."/>
            <person name="Morinaga M."/>
            <person name="Sasaki M."/>
            <person name="Togashi T."/>
            <person name="Oyama M."/>
            <person name="Hata H."/>
            <person name="Watanabe M."/>
            <person name="Komatsu T."/>
            <person name="Mizushima-Sugano J."/>
            <person name="Satoh T."/>
            <person name="Shirai Y."/>
            <person name="Takahashi Y."/>
            <person name="Nakagawa K."/>
            <person name="Okumura K."/>
            <person name="Nagase T."/>
            <person name="Nomura N."/>
            <person name="Kikuchi H."/>
            <person name="Masuho Y."/>
            <person name="Yamashita R."/>
            <person name="Nakai K."/>
            <person name="Yada T."/>
            <person name="Nakamura Y."/>
            <person name="Ohara O."/>
            <person name="Isogai T."/>
            <person name="Sugano S."/>
        </authorList>
    </citation>
    <scope>NUCLEOTIDE SEQUENCE [LARGE SCALE MRNA]</scope>
    <source>
        <tissue>Heart</tissue>
    </source>
</reference>
<reference key="8">
    <citation type="journal article" date="2006" name="Nature">
        <title>The DNA sequence and biological annotation of human chromosome 1.</title>
        <authorList>
            <person name="Gregory S.G."/>
            <person name="Barlow K.F."/>
            <person name="McLay K.E."/>
            <person name="Kaul R."/>
            <person name="Swarbreck D."/>
            <person name="Dunham A."/>
            <person name="Scott C.E."/>
            <person name="Howe K.L."/>
            <person name="Woodfine K."/>
            <person name="Spencer C.C.A."/>
            <person name="Jones M.C."/>
            <person name="Gillson C."/>
            <person name="Searle S."/>
            <person name="Zhou Y."/>
            <person name="Kokocinski F."/>
            <person name="McDonald L."/>
            <person name="Evans R."/>
            <person name="Phillips K."/>
            <person name="Atkinson A."/>
            <person name="Cooper R."/>
            <person name="Jones C."/>
            <person name="Hall R.E."/>
            <person name="Andrews T.D."/>
            <person name="Lloyd C."/>
            <person name="Ainscough R."/>
            <person name="Almeida J.P."/>
            <person name="Ambrose K.D."/>
            <person name="Anderson F."/>
            <person name="Andrew R.W."/>
            <person name="Ashwell R.I.S."/>
            <person name="Aubin K."/>
            <person name="Babbage A.K."/>
            <person name="Bagguley C.L."/>
            <person name="Bailey J."/>
            <person name="Beasley H."/>
            <person name="Bethel G."/>
            <person name="Bird C.P."/>
            <person name="Bray-Allen S."/>
            <person name="Brown J.Y."/>
            <person name="Brown A.J."/>
            <person name="Buckley D."/>
            <person name="Burton J."/>
            <person name="Bye J."/>
            <person name="Carder C."/>
            <person name="Chapman J.C."/>
            <person name="Clark S.Y."/>
            <person name="Clarke G."/>
            <person name="Clee C."/>
            <person name="Cobley V."/>
            <person name="Collier R.E."/>
            <person name="Corby N."/>
            <person name="Coville G.J."/>
            <person name="Davies J."/>
            <person name="Deadman R."/>
            <person name="Dunn M."/>
            <person name="Earthrowl M."/>
            <person name="Ellington A.G."/>
            <person name="Errington H."/>
            <person name="Frankish A."/>
            <person name="Frankland J."/>
            <person name="French L."/>
            <person name="Garner P."/>
            <person name="Garnett J."/>
            <person name="Gay L."/>
            <person name="Ghori M.R.J."/>
            <person name="Gibson R."/>
            <person name="Gilby L.M."/>
            <person name="Gillett W."/>
            <person name="Glithero R.J."/>
            <person name="Grafham D.V."/>
            <person name="Griffiths C."/>
            <person name="Griffiths-Jones S."/>
            <person name="Grocock R."/>
            <person name="Hammond S."/>
            <person name="Harrison E.S.I."/>
            <person name="Hart E."/>
            <person name="Haugen E."/>
            <person name="Heath P.D."/>
            <person name="Holmes S."/>
            <person name="Holt K."/>
            <person name="Howden P.J."/>
            <person name="Hunt A.R."/>
            <person name="Hunt S.E."/>
            <person name="Hunter G."/>
            <person name="Isherwood J."/>
            <person name="James R."/>
            <person name="Johnson C."/>
            <person name="Johnson D."/>
            <person name="Joy A."/>
            <person name="Kay M."/>
            <person name="Kershaw J.K."/>
            <person name="Kibukawa M."/>
            <person name="Kimberley A.M."/>
            <person name="King A."/>
            <person name="Knights A.J."/>
            <person name="Lad H."/>
            <person name="Laird G."/>
            <person name="Lawlor S."/>
            <person name="Leongamornlert D.A."/>
            <person name="Lloyd D.M."/>
            <person name="Loveland J."/>
            <person name="Lovell J."/>
            <person name="Lush M.J."/>
            <person name="Lyne R."/>
            <person name="Martin S."/>
            <person name="Mashreghi-Mohammadi M."/>
            <person name="Matthews L."/>
            <person name="Matthews N.S.W."/>
            <person name="McLaren S."/>
            <person name="Milne S."/>
            <person name="Mistry S."/>
            <person name="Moore M.J.F."/>
            <person name="Nickerson T."/>
            <person name="O'Dell C.N."/>
            <person name="Oliver K."/>
            <person name="Palmeiri A."/>
            <person name="Palmer S.A."/>
            <person name="Parker A."/>
            <person name="Patel D."/>
            <person name="Pearce A.V."/>
            <person name="Peck A.I."/>
            <person name="Pelan S."/>
            <person name="Phelps K."/>
            <person name="Phillimore B.J."/>
            <person name="Plumb R."/>
            <person name="Rajan J."/>
            <person name="Raymond C."/>
            <person name="Rouse G."/>
            <person name="Saenphimmachak C."/>
            <person name="Sehra H.K."/>
            <person name="Sheridan E."/>
            <person name="Shownkeen R."/>
            <person name="Sims S."/>
            <person name="Skuce C.D."/>
            <person name="Smith M."/>
            <person name="Steward C."/>
            <person name="Subramanian S."/>
            <person name="Sycamore N."/>
            <person name="Tracey A."/>
            <person name="Tromans A."/>
            <person name="Van Helmond Z."/>
            <person name="Wall M."/>
            <person name="Wallis J.M."/>
            <person name="White S."/>
            <person name="Whitehead S.L."/>
            <person name="Wilkinson J.E."/>
            <person name="Willey D.L."/>
            <person name="Williams H."/>
            <person name="Wilming L."/>
            <person name="Wray P.W."/>
            <person name="Wu Z."/>
            <person name="Coulson A."/>
            <person name="Vaudin M."/>
            <person name="Sulston J.E."/>
            <person name="Durbin R.M."/>
            <person name="Hubbard T."/>
            <person name="Wooster R."/>
            <person name="Dunham I."/>
            <person name="Carter N.P."/>
            <person name="McVean G."/>
            <person name="Ross M.T."/>
            <person name="Harrow J."/>
            <person name="Olson M.V."/>
            <person name="Beck S."/>
            <person name="Rogers J."/>
            <person name="Bentley D.R."/>
        </authorList>
    </citation>
    <scope>NUCLEOTIDE SEQUENCE [LARGE SCALE GENOMIC DNA]</scope>
</reference>
<reference key="9">
    <citation type="submission" date="2005-07" db="EMBL/GenBank/DDBJ databases">
        <authorList>
            <person name="Mural R.J."/>
            <person name="Istrail S."/>
            <person name="Sutton G.G."/>
            <person name="Florea L."/>
            <person name="Halpern A.L."/>
            <person name="Mobarry C.M."/>
            <person name="Lippert R."/>
            <person name="Walenz B."/>
            <person name="Shatkay H."/>
            <person name="Dew I."/>
            <person name="Miller J.R."/>
            <person name="Flanigan M.J."/>
            <person name="Edwards N.J."/>
            <person name="Bolanos R."/>
            <person name="Fasulo D."/>
            <person name="Halldorsson B.V."/>
            <person name="Hannenhalli S."/>
            <person name="Turner R."/>
            <person name="Yooseph S."/>
            <person name="Lu F."/>
            <person name="Nusskern D.R."/>
            <person name="Shue B.C."/>
            <person name="Zheng X.H."/>
            <person name="Zhong F."/>
            <person name="Delcher A.L."/>
            <person name="Huson D.H."/>
            <person name="Kravitz S.A."/>
            <person name="Mouchard L."/>
            <person name="Reinert K."/>
            <person name="Remington K.A."/>
            <person name="Clark A.G."/>
            <person name="Waterman M.S."/>
            <person name="Eichler E.E."/>
            <person name="Adams M.D."/>
            <person name="Hunkapiller M.W."/>
            <person name="Myers E.W."/>
            <person name="Venter J.C."/>
        </authorList>
    </citation>
    <scope>NUCLEOTIDE SEQUENCE [LARGE SCALE GENOMIC DNA]</scope>
</reference>
<reference key="10">
    <citation type="journal article" date="2004" name="Genome Res.">
        <title>The status, quality, and expansion of the NIH full-length cDNA project: the Mammalian Gene Collection (MGC).</title>
        <authorList>
            <consortium name="The MGC Project Team"/>
        </authorList>
    </citation>
    <scope>NUCLEOTIDE SEQUENCE [LARGE SCALE MRNA]</scope>
    <source>
        <tissue>Brain</tissue>
    </source>
</reference>
<reference key="11">
    <citation type="journal article" date="1998" name="J. Biol. Chem.">
        <title>Gene structure and properties of TIGR, an olfactomedin-related glycoprotein cloned from glucocorticoid-induced trabecular meshwork cells.</title>
        <authorList>
            <person name="Nguyen T.D."/>
            <person name="Chen P."/>
            <person name="Huang W.D."/>
            <person name="Chen H."/>
            <person name="Johnson D."/>
            <person name="Polansky J.R."/>
        </authorList>
    </citation>
    <scope>PROTEIN SEQUENCE OF 1-6 (PRECURSOR PROTEIN)</scope>
    <scope>PROTEIN SEQUENCE OF 33-37</scope>
    <scope>SEQUENCE REVISION</scope>
    <scope>OLIGOMERIZATION</scope>
    <scope>SUBUNIT</scope>
    <scope>SUBCELLULAR LOCATION</scope>
    <scope>INDUCTION BY GLUCOCORTICOIDS</scope>
</reference>
<reference key="12">
    <citation type="journal article" date="2009" name="Mol. Vis.">
        <title>Dual localization of wild-type myocilin in the endoplasmic reticulum and extracellular compartment likely occurs due to its incomplete secretion.</title>
        <authorList>
            <person name="Sohn S."/>
            <person name="Joe M.K."/>
            <person name="Kim T.E."/>
            <person name="Im J.E."/>
            <person name="Choi Y.R."/>
            <person name="Park H."/>
            <person name="Kee C."/>
        </authorList>
    </citation>
    <scope>PROTEIN SEQUENCE OF 33-37</scope>
    <scope>SUBCELLULAR LOCATION</scope>
    <scope>GLYCOSYLATION</scope>
</reference>
<reference key="13">
    <citation type="journal article" date="2005" name="J. Biol. Chem.">
        <title>Myocilin mutations causing glaucoma inhibit the intracellular endoproteolytic cleavage of myocilin between amino acids Arg226 and Ile227.</title>
        <authorList>
            <person name="Aroca-Aguilar J.D."/>
            <person name="Sanchez-Sanchez F."/>
            <person name="Ghosh S."/>
            <person name="Coca-Prados M."/>
            <person name="Escribano J."/>
        </authorList>
    </citation>
    <scope>PROTEIN SEQUENCE OF 227-233</scope>
    <scope>SUBCELLULAR LOCATION</scope>
    <scope>TISSUE SPECIFICITY</scope>
    <scope>CHARACTERIZATION OF VARIANTS GLC1A LYS-323; LEU-370 AND GLY-380</scope>
    <scope>PROTEOLYTIC PROCESSING</scope>
</reference>
<reference key="14">
    <citation type="journal article" date="2000" name="Invest. Ophthalmol. Vis. Sci.">
        <title>Localization of myocilin to the golgi apparatus in Schlemm's canal cells.</title>
        <authorList>
            <person name="O'Brien E.T."/>
            <person name="Ren X."/>
            <person name="Wang Y."/>
        </authorList>
    </citation>
    <scope>SUBCELLULAR LOCATION</scope>
</reference>
<reference key="15">
    <citation type="journal article" date="2001" name="Invest. Ophthalmol. Vis. Sci.">
        <title>Glucocorticoid induction of the glaucoma gene MYOC in human and monkey trabecular meshwork cells and tissues.</title>
        <authorList>
            <person name="Clark A.F."/>
            <person name="Steely H.T."/>
            <person name="Dickerson J.E. Jr."/>
            <person name="English-Wright S."/>
            <person name="Stropki K."/>
            <person name="McCartney M.D."/>
            <person name="Jacobson N."/>
            <person name="Shepard A.R."/>
            <person name="Clark J.I."/>
            <person name="Matsushima H."/>
            <person name="Peskind E.R."/>
            <person name="Leverenz J.B."/>
            <person name="Wilkinson C.W."/>
            <person name="Swiderski R.E."/>
            <person name="Fingert J.H."/>
            <person name="Sheffield V.C."/>
            <person name="Stone E.M."/>
        </authorList>
    </citation>
    <scope>SUBCELLULAR LOCATION</scope>
    <scope>INDUCTION BY GLUCOCORTICOIDS</scope>
    <scope>GLYCOSYLATION</scope>
    <scope>TISSUE SPECIFICITY</scope>
</reference>
<reference key="16">
    <citation type="journal article" date="2002" name="Hum. Mol. Genet.">
        <title>Optimedin: a novel olfactomedin-related protein that interacts with myocilin.</title>
        <authorList>
            <person name="Torrado M."/>
            <person name="Trivedi R."/>
            <person name="Zinovieva R."/>
            <person name="Karavanova I."/>
            <person name="Tomarev S.I."/>
        </authorList>
    </citation>
    <scope>INTERACTION WITH OLFM3</scope>
</reference>
<reference key="17">
    <citation type="journal article" date="2002" name="Invest. Ophthalmol. Vis. Sci.">
        <title>In vitro localization of TIGR/MYOC in trabecular meshwork extracellular matrix and binding to fibronectin.</title>
        <authorList>
            <person name="Filla M.S."/>
            <person name="Liu X."/>
            <person name="Nguyen T.D."/>
            <person name="Polansky J.R."/>
            <person name="Brandt C.R."/>
            <person name="Kaufman P.L."/>
            <person name="Peters D.M."/>
        </authorList>
    </citation>
    <scope>INTERACTION WITH FN1</scope>
    <scope>SUBCELLULAR LOCATION</scope>
</reference>
<reference key="18">
    <citation type="journal article" date="2002" name="Invest. Ophthalmol. Vis. Sci.">
        <title>Protein interactions with myocilin.</title>
        <authorList>
            <person name="Wentz-Hunter K."/>
            <person name="Ueda J."/>
            <person name="Yue B.Y."/>
        </authorList>
    </citation>
    <scope>INTERACTION WITH MYL2</scope>
</reference>
<reference key="19">
    <citation type="journal article" date="2002" name="Invest. Ophthalmol. Vis. Sci.">
        <title>Distribution of myocilin and extracellular matrix components in the juxtacanalicular tissue of human eyes.</title>
        <authorList>
            <person name="Ueda J."/>
            <person name="Wentz-Hunter K."/>
            <person name="Yue B.Y."/>
        </authorList>
    </citation>
    <scope>SUBCELLULAR LOCATION</scope>
    <scope>TISSUE SPECIFICITY</scope>
</reference>
<reference key="20">
    <citation type="journal article" date="2003" name="Biochem. Biophys. Res. Commun.">
        <title>Expression and characterization of the olfactomedin domain of human myocilin.</title>
        <authorList>
            <person name="Nagy I."/>
            <person name="Trexler M."/>
            <person name="Patthy L."/>
        </authorList>
    </citation>
    <scope>DISULFIDE BOND AT 245-CYS--CYS-433</scope>
</reference>
<reference key="21">
    <citation type="journal article" date="2003" name="BMC Genet.">
        <title>Characterization of rabbit myocilin: implications for human myocilin glycosylation and signal peptide usage.</title>
        <authorList>
            <person name="Shepard A.R."/>
            <person name="Jacobson N."/>
            <person name="Sui R."/>
            <person name="Steely H.T."/>
            <person name="Lotery A.J."/>
            <person name="Stone E.M."/>
            <person name="Clark A.F."/>
        </authorList>
    </citation>
    <scope>CHARACTERIZATION OF VARIANT SER-57</scope>
    <scope>GLYCOSYLATION</scope>
    <scope>TISSUE SPECIFICITY</scope>
    <scope>SUBCELLULAR LOCATION</scope>
</reference>
<reference key="22">
    <citation type="journal article" date="2005" name="J. Biol. Chem.">
        <title>Extracellular trafficking of myocilin in human trabecular meshwork cells.</title>
        <authorList>
            <person name="Hardy K.M."/>
            <person name="Hoffman E.A."/>
            <person name="Gonzalez P."/>
            <person name="McKay B.S."/>
            <person name="Stamer W.D."/>
        </authorList>
    </citation>
    <scope>SUBCELLULAR LOCATION</scope>
</reference>
<reference key="23">
    <citation type="journal article" date="2007" name="J. Biol. Chem.">
        <title>Characterization of the intracellular proteolytic cleavage of myocilin and identification of calpain II as a myocilin-processing protease.</title>
        <authorList>
            <person name="Sanchez-Sanchez F."/>
            <person name="Martinez-Redondo F."/>
            <person name="Aroca-Aguilar J.D."/>
            <person name="Coca-Prados M."/>
            <person name="Escribano J."/>
        </authorList>
    </citation>
    <scope>CLEAVAGE BY CAPN2</scope>
    <scope>SUBCELLULAR LOCATION</scope>
    <scope>GLYCOSYLATION</scope>
    <scope>MUTAGENESIS OF 226-ARG--GLU-230; ARG-226; ILE-227; LYS-229 AND GLU-230</scope>
</reference>
<reference key="24">
    <citation type="journal article" date="2007" name="J. Cell. Physiol.">
        <title>Mitochondrial association of myocilin, product of a glaucoma gene, in human trabecular meshwork cells.</title>
        <authorList>
            <person name="Sakai H."/>
            <person name="Shen X."/>
            <person name="Koga T."/>
            <person name="Park B.C."/>
            <person name="Noskina Y."/>
            <person name="Tibudan M."/>
            <person name="Yue B.Y."/>
        </authorList>
    </citation>
    <scope>FUNCTION IN MITOCHONDRIAL DEPOLARIZATION</scope>
    <scope>SUBCELLULAR LOCATION</scope>
</reference>
<reference key="25">
    <citation type="journal article" date="2008" name="J. Biol. Chem.">
        <title>Rho GTPase and cAMP/protein kinase A signaling mediates myocilin-induced alterations in cultured human trabecular meshwork cells.</title>
        <authorList>
            <person name="Shen X."/>
            <person name="Koga T."/>
            <person name="Park B.C."/>
            <person name="SundarRaj N."/>
            <person name="Yue B.Y."/>
        </authorList>
    </citation>
    <scope>FUNCTION IN CELL-MATRIX ADHESION</scope>
</reference>
<reference key="26">
    <citation type="journal article" date="2009" name="Histochem. Cell Biol.">
        <title>Myocilin promotes substrate adhesion, spreading and formation of focal contacts in podocytes and mesangial cells.</title>
        <authorList>
            <person name="Goldwich A."/>
            <person name="Scholz M."/>
            <person name="Tamm E.R."/>
        </authorList>
    </citation>
    <scope>FUNCTION IN CELL ADHESION</scope>
</reference>
<reference key="27">
    <citation type="journal article" date="2009" name="Mol. Cell. Biol.">
        <title>Myocilin is a modulator of Wnt signaling.</title>
        <authorList>
            <person name="Kwon H.S."/>
            <person name="Lee H.S."/>
            <person name="Ji Y."/>
            <person name="Rubin J.S."/>
            <person name="Tomarev S.I."/>
        </authorList>
    </citation>
    <scope>FUNCTION IN STRESS FIBER ASSEMBLY</scope>
    <scope>INTERACTION WITH FRZB; FZD7; FZD10; FZD1 AND WIF1</scope>
    <scope>CHARACTERIZATION OF VARIANT ASN-477</scope>
</reference>
<reference key="28">
    <citation type="journal article" date="2010" name="Am. J. Pathol.">
        <title>Differential effects of myocilin and optineurin, two glaucoma genes, on neurite outgrowth.</title>
        <authorList>
            <person name="Koga T."/>
            <person name="Shen X."/>
            <person name="Park J.S."/>
            <person name="Qiu Y."/>
            <person name="Park B.C."/>
            <person name="Shyam R."/>
            <person name="Yue B.Y."/>
        </authorList>
    </citation>
    <scope>FUNCTION IN NEURITE OUTGROWTH</scope>
</reference>
<reference key="29">
    <citation type="journal article" date="2011" name="J. Cell. Physiol.">
        <title>Myocilin, a glaucoma-associated protein, promotes cell migration through activation of integrin-focal adhesion kinase-serine/threonine kinase signaling pathway.</title>
        <authorList>
            <person name="Kwon H.S."/>
            <person name="Tomarev S.I."/>
        </authorList>
    </citation>
    <scope>FUNCTION IN CELL MIGRATION</scope>
</reference>
<reference key="30">
    <citation type="journal article" date="2013" name="J. Biol. Chem.">
        <title>Myocilin stimulates osteogenic differentiation of mesenchymal stem cells through mitogen-activated protein kinase signaling.</title>
        <authorList>
            <person name="Kwon H.S."/>
            <person name="Johnson T.V."/>
            <person name="Tomarev S.I."/>
        </authorList>
    </citation>
    <scope>FUNCTION IN OSTEOBLAST DIFFERENTIATION</scope>
</reference>
<reference key="31">
    <citation type="journal article" date="2013" name="J. Biol. Chem.">
        <title>Myocilin mediates myelination in the peripheral nervous system through ErbB2/3 signaling.</title>
        <authorList>
            <person name="Kwon H.S."/>
            <person name="Johnson T.V."/>
            <person name="Joe M.K."/>
            <person name="Abu-Asab M."/>
            <person name="Zhang J."/>
            <person name="Chan C.C."/>
            <person name="Tomarev S.I."/>
        </authorList>
    </citation>
    <scope>FUNCTION IN MYELINATION</scope>
    <scope>INTERACTION WITH NFASC; GLDN AND NRCAM</scope>
</reference>
<reference key="32">
    <citation type="journal article" date="2015" name="Hum. Mol. Genet.">
        <title>Structural basis for misfolding in myocilin-associated glaucoma.</title>
        <authorList>
            <person name="Donegan R.K."/>
            <person name="Hill S.E."/>
            <person name="Freeman D.M."/>
            <person name="Nguyen E."/>
            <person name="Orwig S.D."/>
            <person name="Turnage K.C."/>
            <person name="Lieberman R.L."/>
        </authorList>
    </citation>
    <scope>X-RAY CRYSTALLOGRAPHY (1.90 ANGSTROMS) OF 228-504 IN COMPLEX WITH CALCIUM</scope>
    <scope>DISULFIDE BONDS</scope>
    <scope>CHARACTERIZATION OF VARIANTS GLC1A LYS-293; ILE-353 AND VAL-445</scope>
    <scope>CHARACTERIZATION OF VARIANTS MET-329; CYS-422; PRO-425 AND CYS-473</scope>
</reference>
<reference key="33">
    <citation type="journal article" date="1997" name="Am. J. Hum. Genet.">
        <title>Mutations in the TIGR gene in familial primary open-angle glaucoma in Japan.</title>
        <authorList>
            <person name="Suzuki Y."/>
            <person name="Shirato S."/>
            <person name="Taniguchi F."/>
            <person name="Ohara K."/>
            <person name="Nishimaki K."/>
            <person name="Ohta S."/>
        </authorList>
    </citation>
    <scope>VARIANTS GLC1A ARG-367 AND LEU-370</scope>
</reference>
<reference key="34">
    <citation type="journal article" date="1997" name="Korean J. Ophthalmol.">
        <title>TIGR gene in primary open-angle glaucoma and steroid-induced glaucoma.</title>
        <authorList>
            <person name="Kee C."/>
            <person name="Ahn B.-H."/>
        </authorList>
    </citation>
    <scope>VARIANT GLC1A PRO-341</scope>
</reference>
<reference key="35">
    <citation type="journal article" date="1997" name="Ophthalmic Genet.">
        <title>Identification of a new 'TIGR' mutation in a family with juvenile-onset primary open angle glaucoma.</title>
        <authorList>
            <person name="Stoilova D."/>
            <person name="Child A."/>
            <person name="Brice G."/>
            <person name="Crick R.P."/>
            <person name="Fleck B.W."/>
            <person name="Sarfarazi M."/>
        </authorList>
    </citation>
    <scope>VARIANT GLC1A ARG-337</scope>
</reference>
<reference key="36">
    <citation type="journal article" date="1998" name="Am. J. Hum. Genet.">
        <title>Prevalence of mutations in TIGR/Myocilin in patients with adult and juvenile primary open-angle glaucoma.</title>
        <authorList>
            <person name="Wiggs J.L."/>
            <person name="Allingham R.R."/>
            <person name="Vollrath D."/>
            <person name="Jones K.H."/>
            <person name="De La Paz M."/>
            <person name="Kern J."/>
            <person name="Patterson K."/>
            <person name="Babb V.L."/>
            <person name="Del Bono E.A."/>
            <person name="Broomer B.W."/>
            <person name="Pericak-Vance M.A."/>
            <person name="Haines J.L."/>
        </authorList>
    </citation>
    <scope>VARIANTS GLC1A LYS-352; LEU-370; MET-377 AND HIS-437</scope>
</reference>
<reference key="37">
    <citation type="journal article" date="1998" name="Hum. Genet.">
        <title>Juvenile open angle glaucoma: fine mapping of the TIGR gene to 1q24.3-q25.2 and mutation analysis.</title>
        <authorList>
            <person name="Michels-Rautenstrauss K.G."/>
            <person name="Mardin C.Y."/>
            <person name="Budde W.M."/>
            <person name="Liehr T."/>
            <person name="Polansky J.R."/>
            <person name="Nguyen T."/>
            <person name="Timmerman V."/>
            <person name="van Broeckhoven C."/>
            <person name="Naumann G.O.H."/>
            <person name="Pfeiffer R.A."/>
            <person name="Rautenstrauss B.W."/>
        </authorList>
    </citation>
    <scope>VARIANTS GLC1A ARG-367 AND LEU-370</scope>
</reference>
<reference key="38">
    <citation type="journal article" date="1998" name="Hum. Mutat.">
        <title>Novel mutations in the TIGR gene in early and late onset open angle glaucoma.</title>
        <authorList>
            <person name="Mansergh F.C."/>
            <person name="Kenna P.F."/>
            <person name="Ayuso C."/>
            <person name="Kiang A.-S."/>
            <person name="Humphries P."/>
            <person name="Farrar G.J."/>
        </authorList>
    </citation>
    <scope>VARIANTS GLC1A ARG-367 AND PHE-426</scope>
</reference>
<reference key="39">
    <citation type="journal article" date="1998" name="J. Med. Genet.">
        <title>Novel TIGR/MYOC mutations in families with juvenile onset primary open angle glaucoma.</title>
        <authorList>
            <person name="Stoilova D."/>
            <person name="Child A."/>
            <person name="Brice G."/>
            <person name="Desai T."/>
            <person name="Barsoum-Homsy M."/>
            <person name="Ozdemir N."/>
            <person name="Chevrette L."/>
            <person name="Adam M.F."/>
            <person name="Garchon H.-J."/>
            <person name="Pitts Crick R."/>
            <person name="Sarfarazi M."/>
        </authorList>
    </citation>
    <scope>VARIANTS GLC1A LEU-370; ALA-380 AND PRO-502</scope>
    <scope>VARIANT LYS-76</scope>
</reference>
<reference key="40">
    <citation type="journal article" date="1998" name="Nat. Genet.">
        <title>Homozygotes carrying an autosomal dominant TIGR mutation do not manifest glaucoma.</title>
        <authorList>
            <person name="Morissette J."/>
            <person name="Clepet C."/>
            <person name="Moisan S."/>
            <person name="Dubois S."/>
            <person name="Winstall E."/>
            <person name="Vermeeren D."/>
            <person name="Nguyen T.D."/>
            <person name="Polansky J.R."/>
            <person name="Cote G."/>
            <person name="Anctil J.-L."/>
            <person name="Amyot M."/>
            <person name="Plante M."/>
            <person name="Falardeau P."/>
            <person name="Raymond V."/>
        </authorList>
    </citation>
    <scope>VARIANT GLC1A GLU-423</scope>
</reference>
<reference key="41">
    <citation type="journal article" date="1998" name="N. Engl. J. Med.">
        <title>Clinical features associated with mutations in the chromosome 1 open-angle glaucoma gene.</title>
        <authorList>
            <person name="Alward W.L.M."/>
            <person name="Fingert J.H."/>
            <person name="Coote M.A."/>
            <person name="Johnson A.T."/>
            <person name="Lerner S.F."/>
            <person name="Junqua D."/>
            <person name="Durcan F.J."/>
            <person name="McCartney P.J."/>
            <person name="Mackey D.A."/>
            <person name="Sheffield V.C."/>
            <person name="Stone E.M."/>
        </authorList>
    </citation>
    <scope>VARIANTS GLC1A CYS-82; ARG-286; SER-361 AND HIS-422</scope>
</reference>
<reference key="42">
    <citation type="journal article" date="1999" name="Am. J. Hum. Genet.">
        <title>Mutations of the TIGR/MYOC gene in primary open-angle glaucoma in Korea.</title>
        <authorList>
            <person name="Yoon S.-J.K."/>
            <person name="Kim H.-S."/>
            <person name="Moon J.-I."/>
            <person name="Lim J.M."/>
            <person name="Joo C.-K."/>
        </authorList>
    </citation>
    <scope>VARIANT GLC1A ILE-353</scope>
</reference>
<reference key="43">
    <citation type="journal article" date="1999" name="Hum. Mol. Genet.">
        <title>Analysis of myocilin mutations in 1703 glaucoma patients from five different populations.</title>
        <authorList>
            <person name="Fingert J.H."/>
            <person name="Heon E."/>
            <person name="Liebmann J.M."/>
            <person name="Yamamoto T."/>
            <person name="Craig J.E."/>
            <person name="Rait J."/>
            <person name="Kawase K."/>
            <person name="Hoh S.-T."/>
            <person name="Buys Y.M."/>
            <person name="Dickinson J."/>
            <person name="Hockey R.R."/>
            <person name="Williams-Lyn D."/>
            <person name="Trope G."/>
            <person name="Kitazawa Y."/>
            <person name="Ritch R."/>
            <person name="Mackey D.A."/>
            <person name="Alward W.L.M."/>
            <person name="Sheffield V.C."/>
            <person name="Stone E.M."/>
        </authorList>
    </citation>
    <scope>VARIANTS GLC1A SER-4; SER-9; PHE-203; ARG-393; CYS-422; MET-465; LEU-481; THR-481; ILE-495 AND ARG-500</scope>
    <scope>VARIANTS SER-73; HIS-82 AND GLN-189</scope>
</reference>
<reference key="44">
    <citation type="journal article" date="1999" name="Jpn. J. Ophthalmol.">
        <title>Detection of a new TIGR gene mutation in a Japanese family with primary open angle glaucoma.</title>
        <authorList>
            <person name="Yokoyama A."/>
            <person name="Nao-i N."/>
            <person name="Date Y."/>
            <person name="Nakazato M."/>
            <person name="Chumann H."/>
            <person name="Chihara E."/>
            <person name="Sawada A."/>
            <person name="Matsukura S."/>
        </authorList>
    </citation>
    <scope>VARIANT GLC1A PRO-448</scope>
</reference>
<reference key="45">
    <citation type="journal article" date="2000" name="Am. J. Ophthalmol.">
        <title>Age-dependent prevalence of mutations at the GLC1A locus in primary open-angle glaucoma.</title>
        <authorList>
            <person name="Shimizu S."/>
            <person name="Lichter P.R."/>
            <person name="Johnson A.T."/>
            <person name="Zhou Z."/>
            <person name="Higashi M."/>
            <person name="Gottfredsdottir M."/>
            <person name="Othman M."/>
            <person name="Moroi S.E."/>
            <person name="Rozsa F.W."/>
            <person name="Schertzer R.M."/>
            <person name="Clarke M.S."/>
            <person name="Schwartz A.L."/>
            <person name="Downs C.A."/>
            <person name="Vollrath D."/>
            <person name="Richards J.E."/>
        </authorList>
    </citation>
    <scope>VARIANTS GLC1A ASP-57; ARG-252; GLY-272; LYS-323; LEU-370; MET-377; PHE-426; ASN-477 AND SER-499</scope>
    <scope>VARIANTS LYS-76; MET-329 AND ARG-398</scope>
    <scope>CHARACTERIZATION OF VARIANTS GLC1A ARG-252; GLY-272; LYS-323; LEU-370; MET-377; PHE-426; ASN-477 AND SER-499</scope>
    <scope>CHARACTERIZATION OF VARIANTS MET-329 AND ARG-398</scope>
</reference>
<reference key="46">
    <citation type="journal article" date="2000" name="Br. J. Ophthalmol.">
        <title>Genetic screening in a large family with juvenile onset primary open angle glaucoma.</title>
        <authorList>
            <person name="Booth A.P."/>
            <person name="Anwar R."/>
            <person name="Chen H."/>
            <person name="Churchill A.J."/>
            <person name="Jay J."/>
            <person name="Polansky J."/>
            <person name="Nguyen T."/>
            <person name="Markham A.F."/>
        </authorList>
    </citation>
    <scope>VARIANT GLC1A ARG-252</scope>
</reference>
<reference key="47">
    <citation type="journal article" date="2000" name="Hum. Mutat.">
        <title>Novel TIGR sequence alteration Val53Ala.</title>
        <authorList>
            <person name="Pang C.P."/>
            <person name="Leung Y.F."/>
            <person name="Chua J.K.H."/>
            <person name="Baum L."/>
            <person name="Fan D.S.P."/>
            <person name="Lam D.S."/>
        </authorList>
    </citation>
    <scope>VARIANT GLC1A ALA-53</scope>
</reference>
<reference key="48">
    <citation type="journal article" date="2000" name="Hum. Mutat.">
        <title>Novel mutations in the myocilin gene in Japanese glaucoma patients.</title>
        <authorList>
            <person name="Kubota R."/>
            <person name="Mashima Y."/>
            <person name="Ohtake Y."/>
            <person name="Tanino T."/>
            <person name="Kimura T."/>
            <person name="Hotta Y."/>
            <person name="Kanai A."/>
            <person name="Tokuoka S."/>
            <person name="Azuma I."/>
            <person name="Tanihara H."/>
            <person name="Inatani M."/>
            <person name="Inoue Y."/>
            <person name="Kudoh J."/>
            <person name="Oguchi Y."/>
            <person name="Shimizu N."/>
        </authorList>
    </citation>
    <scope>VARIANTS GLC1A GLN-158; ASN-360 AND THR-363</scope>
    <scope>VARIANTS HIS-19; LYS-76; GLU-208 AND HIS-470</scope>
</reference>
<reference key="49">
    <citation type="journal article" date="2000" name="Invest. Ophthalmol. Vis. Sci.">
        <title>Truncations in the TIGR gene in individuals with and without primary open-angle glaucoma.</title>
        <authorList>
            <person name="Lam D.S.C."/>
            <person name="Leung Y.F."/>
            <person name="Chua J.K.H."/>
            <person name="Baum L."/>
            <person name="Fan D.S.P."/>
            <person name="Choy K.W."/>
            <person name="Pang C.P."/>
        </authorList>
    </citation>
    <scope>VARIANTS GLC1A GLU-208 AND ILE-353</scope>
    <scope>VARIANTS ARG-12 AND LYS-76</scope>
</reference>
<reference key="50">
    <citation type="journal article" date="2000" name="J. Med. Genet.">
        <title>Novel mutation in the MYOC gene in primary open glaucoma patients.</title>
        <authorList>
            <person name="Vasconcellos J.P.C."/>
            <person name="Melo M.B."/>
            <person name="Tsukumo D.M.L."/>
            <person name="Basseres D.S."/>
            <person name="Bordin S."/>
            <person name="Saad S.T.O."/>
            <person name="Costa F.F."/>
        </authorList>
    </citation>
    <scope>VARIANT GLC1A ARG-433</scope>
</reference>
<reference key="51">
    <citation type="journal article" date="2000" name="Ophthalmic Genet.">
        <title>Mutations in the third exon of the MYOC gene in Spanish patients with primary open angle glaucoma.</title>
        <authorList>
            <person name="Vazquez C.M."/>
            <person name="Herrero O.M.V."/>
            <person name="Bastus B.M."/>
            <person name="Perez V.D."/>
        </authorList>
    </citation>
    <scope>VARIANTS GLC1A LYS-261 AND GLU-337</scope>
    <scope>VARIANT ARG-398</scope>
</reference>
<reference key="52">
    <citation type="journal article" date="2002" name="Am. J. Hum. Genet.">
        <title>Digenic inheritance of early-onset glaucoma: CYP1B1, a potential modifier gene.</title>
        <authorList>
            <person name="Vincent A.L."/>
            <person name="Billingsley G."/>
            <person name="Buys Y."/>
            <person name="Levin A.V."/>
            <person name="Priston M."/>
            <person name="Trope G."/>
            <person name="Williams-Lyn D."/>
            <person name="Heon E."/>
        </authorList>
    </citation>
    <scope>VARIANTS GLC1A ARG-252; LYS-293; ARG-367; LEU-370; LYS-377; VAL-399 AND VAL-445</scope>
    <scope>VARIANT ARG-398</scope>
</reference>
<reference key="53">
    <citation type="journal article" date="2002" name="Hum. Mol. Genet.">
        <title>Founder TIGR/myocilin mutations for glaucoma in the Quebec population.</title>
        <authorList>
            <consortium name="The Quebec glaucoma network"/>
            <person name="Faucher M."/>
            <person name="Anctil J.-L."/>
            <person name="Rodrigue M.-A."/>
            <person name="Duchesne A."/>
            <person name="Bergeron D."/>
            <person name="Blondeau P."/>
            <person name="Cote G."/>
            <person name="Dubois S."/>
            <person name="Bergeron J."/>
            <person name="Arseneault R."/>
            <person name="Morissette J."/>
            <person name="Raymond V."/>
        </authorList>
    </citation>
    <scope>VARIANTS GLC1A TRP-126; LYS-293; LYS-352; ARG-367; GLU-423; THR-427; VAL-445 AND LEU-481</scope>
    <scope>VARIANTS LYS-76; GLU-77 AND ARG-398</scope>
</reference>
<reference key="54">
    <citation type="journal article" date="2002" name="Hum. Mutat.">
        <title>Novel mutations in the MYOC/GLC1A gene in a large group of glaucoma patients.</title>
        <authorList>
            <person name="Michels-Rautenstrauss K."/>
            <person name="Mardin C."/>
            <person name="Wakili N."/>
            <person name="Juenemann A.M."/>
            <person name="Villalobos L."/>
            <person name="Mejia C."/>
            <person name="Soley G.C."/>
            <person name="Azofeifa J."/>
            <person name="Oezbey S."/>
            <person name="Naumann G.O.H."/>
            <person name="Reis A."/>
            <person name="Rautenstrauss B."/>
        </authorList>
    </citation>
    <scope>VARIANTS GLC1A ALA-251; MET-345; ARG-367; LEU-370; ASN-393; SER-434; ASP-450 AND CYS-470</scope>
    <scope>VARIANT LYS-76</scope>
</reference>
<reference key="55">
    <citation type="journal article" date="2002" name="Invest. Ophthalmol. Vis. Sci.">
        <title>TIGR/MYOC gene sequence alterations in individuals with and without primary open-angle glaucoma.</title>
        <authorList>
            <person name="Pang C.P."/>
            <person name="Leung Y.F."/>
            <person name="Fan B."/>
            <person name="Baum L."/>
            <person name="Tong W.C."/>
            <person name="Lee W.S."/>
            <person name="Chua J.K.H."/>
            <person name="Fan D.S.P."/>
            <person name="Liu Y."/>
            <person name="Lam D.S.C."/>
        </authorList>
    </citation>
    <scope>VARIANTS GLC1A PRO-95; LYS-300; LYS-414 AND CYS-471</scope>
    <scope>VARIANTS ARG-12; LEU-16; SER-17; LYS-76; GLU-208; PRO-215 AND ILE-353</scope>
</reference>
<reference key="56">
    <citation type="journal article" date="2002" name="J. Glaucoma">
        <title>Prevalence of myocilin mutations in adults with primary open-angle glaucoma in Ghana, West Africa.</title>
        <authorList>
            <person name="Challa P."/>
            <person name="Herndon L.W."/>
            <person name="Hauser M.A."/>
            <person name="Broomer B.W."/>
            <person name="Pericak-Vance M.A."/>
            <person name="Ababio-Danso B."/>
            <person name="Allingham R.R."/>
        </authorList>
    </citation>
    <scope>VARIANTS GLC1A LYS-342 AND ASN-380</scope>
</reference>
<reference key="57">
    <citation type="journal article" date="2003" name="Arch. Ophthalmol.">
        <title>Mutations in the myocilin gene in families with primary open-angle glaucoma and juvenile open-angle glaucoma.</title>
        <authorList>
            <person name="Bruttini M."/>
            <person name="Longo I."/>
            <person name="Frezzotti P."/>
            <person name="Ciappetta R."/>
            <person name="Randazzo A."/>
            <person name="Orzalesi N."/>
            <person name="Fumagalli E."/>
            <person name="Caporossi A."/>
            <person name="Frezzotti R."/>
            <person name="Renieri A."/>
        </authorList>
    </citation>
    <scope>VARIANTS GLC1A ARG-25 AND GLU-423</scope>
</reference>
<reference key="58">
    <citation type="journal article" date="2003" name="Hum. Mutat.">
        <title>Myocilin analysis by DHPLC in French POAG patients: increased prevalence of Q368X mutation.</title>
        <authorList>
            <person name="Melki R."/>
            <person name="Belmouden A."/>
            <person name="Brezin A."/>
            <person name="Garchon H.-J."/>
        </authorList>
    </citation>
    <scope>VARIANTS GLC1A ARG-367; ILE-438; LYS-480 AND PHE-499</scope>
    <scope>VARIANTS SER-57; LYS-76 AND ARG-398</scope>
</reference>
<reference key="59">
    <citation type="journal article" date="2004" name="Clin. Genet.">
        <title>Low frequency of myocilin mutations in Indian primary open-angle glaucoma patients.</title>
        <authorList>
            <person name="Sripriya S."/>
            <person name="Uthra S."/>
            <person name="Sangeetha R."/>
            <person name="George R.J."/>
            <person name="Hemamalini A."/>
            <person name="Paul P.G."/>
            <person name="Amali J."/>
            <person name="Vijaya L."/>
            <person name="Kumaramanickavel G."/>
        </authorList>
    </citation>
    <scope>VARIANT GLC1A HIS-48</scope>
    <scope>VARIANT LYS-76</scope>
</reference>
<reference key="60">
    <citation type="journal article" date="2004" name="J. Glaucoma">
        <title>Novel MYOC gene mutation, Phe369Leu, in Japanese patients with primary open-angle glaucoma detected by denaturing high-performance liquid chromatography.</title>
        <authorList>
            <person name="Ishikawa K."/>
            <person name="Funayama T."/>
            <person name="Ohtake Y."/>
            <person name="Tanino T."/>
            <person name="Kurosaka D."/>
            <person name="Suzuki K."/>
            <person name="Ideta H."/>
            <person name="Fujimaki T."/>
            <person name="Tanihara H."/>
            <person name="Asaoka R."/>
            <person name="Naoi N."/>
            <person name="Yasuda N."/>
            <person name="Iwata T."/>
            <person name="Mashima Y."/>
        </authorList>
    </citation>
    <scope>VARIANTS GLC1A ASN-360; THR-363; LEU-369 AND PRO-448</scope>
</reference>
<reference key="61">
    <citation type="journal article" date="2004" name="Ophthalmic Genet.">
        <title>Genetic analysis of an Indian family with members affected with juvenile-onset primary open-angle glaucoma.</title>
        <authorList>
            <person name="Markandaya M."/>
            <person name="Ramesh T.K."/>
            <person name="Selvaraju V."/>
            <person name="Dorairaj S.K."/>
            <person name="Prakash R."/>
            <person name="Shetty J."/>
            <person name="Kumar A."/>
        </authorList>
    </citation>
    <scope>VARIANT GLC1A ARG-274</scope>
</reference>
<reference key="62">
    <citation type="journal article" date="2005" name="Clin. Genet.">
        <title>Myocilin gene implicated in primary congenital glaucoma.</title>
        <authorList>
            <person name="Kaur K."/>
            <person name="Reddy A.B.M."/>
            <person name="Mukhopadhyay A."/>
            <person name="Mandal A.K."/>
            <person name="Hasnain S.E."/>
            <person name="Ray K."/>
            <person name="Thomas R."/>
            <person name="Balasubramanian D."/>
            <person name="Chakrabarti S."/>
        </authorList>
    </citation>
    <scope>VARIANT GLC3A HIS-48</scope>
</reference>
<reference key="63">
    <citation type="journal article" date="2006" name="Arch. Ophthalmol.">
        <title>Novel myocilin mutation in a Chinese family with juvenile-onset open-angle glaucoma.</title>
        <authorList>
            <person name="Fan B.J."/>
            <person name="Leung D.Y.L."/>
            <person name="Wang D.Y."/>
            <person name="Gobeil S."/>
            <person name="Raymond V."/>
            <person name="Tam P.O.S."/>
            <person name="Lam D.S.C."/>
            <person name="Pang C.P."/>
        </authorList>
    </citation>
    <scope>VARIANT GLC1A TYR-245</scope>
    <scope>CHARACTERIZATION OF VARIANT GLC1A TYR-245</scope>
</reference>
<reference key="64">
    <citation type="journal article" date="2007" name="Am. J. Ophthalmol.">
        <title>Clinical features associated with an Asp380His Myocilin mutation in a US family with primary open-angle glaucoma.</title>
        <authorList>
            <person name="Wirtz M.K."/>
            <person name="Samples J.R."/>
            <person name="Choi D."/>
            <person name="Gaudette N.D."/>
        </authorList>
    </citation>
    <scope>VARIANT GLC1A HIS-380</scope>
</reference>
<reference key="65">
    <citation type="journal article" date="2007" name="Arch. Ophthalmol.">
        <title>Myocilin Gly252Arg mutation and glaucoma of intermediate severity in Caucasian individuals.</title>
        <authorList>
            <person name="Hewitt A.W."/>
            <person name="Bennett S.L."/>
            <person name="Richards J.E."/>
            <person name="Dimasi D.P."/>
            <person name="Booth A.P."/>
            <person name="Inglehearn C."/>
            <person name="Anwar R."/>
            <person name="Yamamoto T."/>
            <person name="Fingert J.H."/>
            <person name="Heon E."/>
            <person name="Craig J.E."/>
            <person name="Mackey D.A."/>
        </authorList>
    </citation>
    <scope>VARIANTS GLC1A VAL-244 AND ARG-252</scope>
</reference>
<organism>
    <name type="scientific">Homo sapiens</name>
    <name type="common">Human</name>
    <dbReference type="NCBI Taxonomy" id="9606"/>
    <lineage>
        <taxon>Eukaryota</taxon>
        <taxon>Metazoa</taxon>
        <taxon>Chordata</taxon>
        <taxon>Craniata</taxon>
        <taxon>Vertebrata</taxon>
        <taxon>Euteleostomi</taxon>
        <taxon>Mammalia</taxon>
        <taxon>Eutheria</taxon>
        <taxon>Euarchontoglires</taxon>
        <taxon>Primates</taxon>
        <taxon>Haplorrhini</taxon>
        <taxon>Catarrhini</taxon>
        <taxon>Hominidae</taxon>
        <taxon>Homo</taxon>
    </lineage>
</organism>
<comment type="function">
    <text evidence="1 39 41 42 43 45 46 47 48">Secreted glycoprotein regulating the activation of different signaling pathways in adjacent cells to control different processes including cell adhesion, cell-matrix adhesion, cytoskeleton organization and cell migration. Promotes substrate adhesion, spreading and formation of focal contacts. Negatively regulates cell-matrix adhesion and stress fiber assembly through Rho protein signal transduction. Modulates the organization of actin cytoskeleton by stimulating the formation of stress fibers through interactions with components of Wnt signaling pathways. Promotes cell migration through activation of PTK2 and the downstream phosphatidylinositol 3-kinase signaling. Plays a role in bone formation and promotes osteoblast differentiation in a dose-dependent manner through mitogen-activated protein kinase signaling. Mediates myelination in the peripheral nervous system through ERBB2/ERBB3 signaling. Plays a role as a regulator of muscle hypertrophy through the components of dystrophin-associated protein complex. Involved in positive regulation of mitochondrial depolarization. Plays a role in neurite outgrowth. May participate in the obstruction of fluid outflow in the trabecular meshwork.</text>
</comment>
<comment type="subunit">
    <text evidence="1 18 19 21 43 48 56">Homodimer (via N-terminus). Can also form higher oligomers (PubMed:9497363). Interacts with OLFM3, FN1, NRCAM, GLDN and NFASC (PubMed:11773026, PubMed:12019210, PubMed:23897819). Interacts (via N-terminus) with MYL2 (PubMed:11773029). Interacts with SFRP1, FRZB, FZD7, FZD10, FZD1 and WIF1; regulates Wnt signaling (PubMed:19188438). Interacts with SNTA1; regulates muscle hypertrophy. Interacts with ERBB2 and ERBB3; activates ERBB2-ERBB3 signaling pathway. Interacts with SNCG; affects its secretion and its aggregation (By similarity).</text>
</comment>
<comment type="interaction">
    <interactant intactId="EBI-11692272">
        <id>Q99972</id>
    </interactant>
    <interactant intactId="EBI-725770">
        <id>P10916</id>
        <label>MYL2</label>
    </interactant>
    <organismsDiffer>false</organismsDiffer>
    <experiments>7</experiments>
</comment>
<comment type="interaction">
    <interactant intactId="EBI-11692272">
        <id>Q99972</id>
    </interactant>
    <interactant intactId="EBI-347996">
        <id>O43765</id>
        <label>SGTA</label>
    </interactant>
    <organismsDiffer>false</organismsDiffer>
    <experiments>3</experiments>
</comment>
<comment type="interaction">
    <interactant intactId="EBI-11692272">
        <id>Q99972</id>
    </interactant>
    <interactant intactId="EBI-2800983">
        <id>P09486</id>
        <label>SPARC</label>
    </interactant>
    <organismsDiffer>false</organismsDiffer>
    <experiments>3</experiments>
</comment>
<comment type="interaction">
    <interactant intactId="EBI-11692272">
        <id>Q99972</id>
    </interactant>
    <interactant intactId="EBI-2682673">
        <id>Q14515</id>
        <label>SPARCL1</label>
    </interactant>
    <organismsDiffer>false</organismsDiffer>
    <experiments>2</experiments>
</comment>
<comment type="subcellular location">
    <subcellularLocation>
        <location evidence="17 27 44 56">Secreted</location>
    </subcellularLocation>
    <subcellularLocation>
        <location evidence="16">Golgi apparatus</location>
    </subcellularLocation>
    <subcellularLocation>
        <location evidence="17">Cytoplasmic vesicle</location>
    </subcellularLocation>
    <subcellularLocation>
        <location>Secreted</location>
        <location>Extracellular space</location>
    </subcellularLocation>
    <subcellularLocation>
        <location evidence="18 67">Secreted</location>
        <location evidence="18 67">Extracellular space</location>
        <location evidence="18 67">Extracellular matrix</location>
    </subcellularLocation>
    <subcellularLocation>
        <location evidence="35">Secreted</location>
        <location evidence="35">Extracellular exosome</location>
    </subcellularLocation>
    <subcellularLocation>
        <location evidence="39">Mitochondrion</location>
    </subcellularLocation>
    <subcellularLocation>
        <location evidence="39">Mitochondrion intermembrane space</location>
    </subcellularLocation>
    <subcellularLocation>
        <location evidence="39">Mitochondrion inner membrane</location>
    </subcellularLocation>
    <subcellularLocation>
        <location evidence="39">Mitochondrion outer membrane</location>
    </subcellularLocation>
    <subcellularLocation>
        <location evidence="44">Rough endoplasmic reticulum</location>
    </subcellularLocation>
    <subcellularLocation>
        <location>Cell projection</location>
    </subcellularLocation>
    <subcellularLocation>
        <location evidence="51">Cell projection</location>
        <location evidence="51">Cilium</location>
    </subcellularLocation>
    <text evidence="16 35 39 51">Located preferentially in the ciliary rootlet and basal body of the connecting cilium of photoreceptor cells, and in the rough endoplasmic reticulum (PubMed:9169133). It is only imported to mitochondria in the trabecular meshwork (PubMed:17516541). Localizes to the Golgi apparatus in Schlemm's canal endothelial cells (PubMed:11053284). Appears in the extracellular space of trabecular meshwork cells by an unconventional mechanism, likely associated with exosome-like vesicles (PubMed:15944158). Localizes in trabecular meshwork extracellular matrix (PubMed:15944158).</text>
</comment>
<comment type="subcellular location">
    <molecule>Myocilin, C-terminal fragment</molecule>
    <subcellularLocation>
        <location>Secreted</location>
    </subcellularLocation>
</comment>
<comment type="subcellular location">
    <molecule>Myocilin, N-terminal fragment</molecule>
    <subcellularLocation>
        <location>Endoplasmic reticulum</location>
    </subcellularLocation>
    <text>Remains retained in the endoplasmic reticulum.</text>
</comment>
<comment type="tissue specificity">
    <text evidence="17 27 34">Detected in aqueous humor (PubMed:12697062). Detected in the eye (at protein level) (PubMed:11431441). Widely expressed. Highly expressed in various types of muscle, ciliary body, papillary sphincter, skeletal muscle, heart, and bone marrow-derived mesenchymal stem cells. Expressed predominantly in the retina. In normal eyes, found in the inner uveal meshwork region and the anterior portion of the meshwork. In contrast, in many glaucomatous eyes, it is found in more regions of the meshwork and seems to be expressed at higher levels than in normal eyes, regardless of the type or clinical severity of glaucoma. The myocilin 35 kDa fragment is detected in aqueous humor and to a lesser extent in iris and ciliary body.</text>
</comment>
<comment type="induction">
    <text evidence="17 56">Up-regulated by dexamethasone, a glucocorticoid.</text>
</comment>
<comment type="PTM">
    <text evidence="56">Different isoforms may arise by post-translational modifications.</text>
</comment>
<comment type="PTM">
    <text evidence="17 27 40 44">Glycosylated.</text>
</comment>
<comment type="PTM">
    <text evidence="2">Palmitoylated.</text>
</comment>
<comment type="PTM">
    <text evidence="34 40">Undergoes a calcium-dependent proteolytic cleavage at Arg-226 by CAPN2 in the endoplasmic reticulum. The result is the production of two fragments, one of 35 kDa containing the C-terminal olfactomedin-like domain, and another of 20 kDa containing the N-terminal leucine zipper-like domain.</text>
</comment>
<comment type="disease" evidence="6 7 8 9 10 11 12 13 14 15 20 22 23 24 25 28 29 30 31 32 34 36 37 38 49 50 52 53 54 55 57 58 59 60 61 62">
    <disease id="DI-00937">
        <name>Glaucoma 1, open angle, A</name>
        <acronym>GLC1A</acronym>
        <description>A form of primary open angle glaucoma (POAG). POAG is characterized by a specific pattern of optic nerve and visual field defects. The angle of the anterior chamber of the eye is open, and usually the intraocular pressure is increased. However, glaucoma can occur at any intraocular pressure. The disease is generally asymptomatic until the late stages, by which time significant and irreversible optic nerve damage has already taken place.</description>
        <dbReference type="MIM" id="137750"/>
    </disease>
    <text>The disease is caused by variants affecting the gene represented in this entry.</text>
</comment>
<comment type="disease" evidence="33">
    <disease id="DI-00935">
        <name>Glaucoma 3, primary congenital, A</name>
        <acronym>GLC3A</acronym>
        <description>An autosomal recessive form of primary congenital glaucoma (PCG). PCG is characterized by marked increase of intraocular pressure at birth or early childhood, large ocular globes (buphthalmos) and corneal edema. It results from developmental defects of the trabecular meshwork and anterior chamber angle of the eye that prevent adequate drainage of aqueous humor.</description>
        <dbReference type="MIM" id="231300"/>
    </disease>
    <text evidence="33">The disease is caused by variants affecting distinct genetic loci, including the gene represented in this entry. MYOC mutations may contribute to GLC3A via digenic inheritance with CYP1B1 and/or another locus associated with the disease (PubMed:15733270).</text>
</comment>
<comment type="sequence caution" evidence="66">
    <conflict type="erroneous initiation">
        <sequence resource="EMBL-CDS" id="BAA24532"/>
    </conflict>
    <text>Truncated N-terminus.</text>
</comment>
<keyword id="KW-0002">3D-structure</keyword>
<keyword id="KW-0106">Calcium</keyword>
<keyword id="KW-0966">Cell projection</keyword>
<keyword id="KW-0969">Cilium</keyword>
<keyword id="KW-0175">Coiled coil</keyword>
<keyword id="KW-0968">Cytoplasmic vesicle</keyword>
<keyword id="KW-0903">Direct protein sequencing</keyword>
<keyword id="KW-0225">Disease variant</keyword>
<keyword id="KW-1015">Disulfide bond</keyword>
<keyword id="KW-0256">Endoplasmic reticulum</keyword>
<keyword id="KW-0272">Extracellular matrix</keyword>
<keyword id="KW-0955">Glaucoma</keyword>
<keyword id="KW-0325">Glycoprotein</keyword>
<keyword id="KW-0333">Golgi apparatus</keyword>
<keyword id="KW-0449">Lipoprotein</keyword>
<keyword id="KW-0472">Membrane</keyword>
<keyword id="KW-0479">Metal-binding</keyword>
<keyword id="KW-0496">Mitochondrion</keyword>
<keyword id="KW-0999">Mitochondrion inner membrane</keyword>
<keyword id="KW-1000">Mitochondrion outer membrane</keyword>
<keyword id="KW-0564">Palmitate</keyword>
<keyword id="KW-1267">Proteomics identification</keyword>
<keyword id="KW-1185">Reference proteome</keyword>
<keyword id="KW-0964">Secreted</keyword>
<keyword id="KW-0732">Signal</keyword>
<sequence>MRFFCARCCSFGPEMPAVQLLLLACLVWDVGARTAQLRKANDQSGRCQYTFSVASPNESSCPEQSQAMSVIHNLQRDSSTQRLDLEATKARLSSLESLLHQLTLDQAARPQETQEGLQRELGTLRRERDQLETQTRELETAYSNLLRDKSVLEEEKKRLRQENENLARRLESSSQEVARLRRGQCPQTRDTARAVPPGSREVSTWNLDTLAFQELKSELTEVPASRILKESPSGYLRSGEGDTGCGELVWVGEPLTLRTAETITGKYGVWMRDPKPTYPYTQETTWRIDTVGTDVRQVFEYDLISQFMQGYPSKVHILPRPLESTGAVVYSGSLYFQGAESRTVIRYELNTETVKAEKEIPGAGYHGQFPYSWGGYTDIDLAVDEAGLWVIYSTDEAKGAIVLSKLNPENLELEQTWETNIRKQSVANAFIICGTLYTVSSYTSADATVNFAYDTGTGISKTLTIPFKNRYKYSSMIDYNPLEKKLFAWDNLNMVTYDIKLSKM</sequence>